<protein>
    <recommendedName>
        <fullName evidence="55">Ras-related protein Rab-11A</fullName>
        <shortName evidence="55">Rab-11</shortName>
        <ecNumber evidence="4">3.6.5.2</ecNumber>
    </recommendedName>
    <alternativeName>
        <fullName>YL8</fullName>
    </alternativeName>
</protein>
<sequence>MGTRDDEYDYLFKVVLIGDSGVGKSNLLSRFTRNEFNLESKSTIGVEFATRSIQVDGKTIKAQIWDTAGQERYRAITSAYYRGAVGALLVYDIAKHLTYENVERWLKELRDHADSNIVIMLVGNKSDLRHLRAVPTDEARAFAEKNGLSFIETSALDSTNVEAAFQTILTEIYRIVSQKQMSDRRENDMSPSNNVVPIHVPPTTENKPKVQCCQNI</sequence>
<proteinExistence type="evidence at protein level"/>
<comment type="function">
    <text evidence="2 3 17 18 27 29 30 32 34 39 40 47 49">The small GTPases Rab are key regulators of intracellular membrane trafficking, from the formation of transport vesicles to their fusion with membranes. Rabs cycle between an inactive GDP-bound form and an active GTP-bound form that is able to recruit to membranes different set of downstream effectors directly responsible for vesicle formation, movement, tethering and fusion (PubMed:15601896, PubMed:15689490, PubMed:17462998, PubMed:19542231, PubMed:20026645, PubMed:20890297, PubMed:21282656, PubMed:26032412). The small Rab GTPase RAB11A regulates endocytic recycling (PubMed:20026645). Forms a functional Rab11/RAB11FIP3/dynein complex that regulates the movement of peripheral sorting endosomes (SE) along microtubule tracks toward the microtubule organizing center/centrosome, generating the endosomal recycling compartment (ERC) (PubMed:20026645). Acts as a major regulator of membrane delivery during cytokinesis (PubMed:15601896). Together with MYO5B and RAB8A participates in epithelial cell polarization (PubMed:21282656). Together with Rabin8/RAB3IP, RAB8A, the exocyst complex, PARD3, PRKCI, ANXA2, CDC42 and DNMBP promotes transcytosis of PODXL to the apical membrane initiation sites (AMIS), apical surface formation and lumenogenesis (PubMed:20890297). Together with MYO5B participates in CFTR trafficking to the plasma membrane and TF (Transferrin) recycling in nonpolarized cells (PubMed:17462998). Required in a complex with MYO5B and RAB11FIP2 for the transport of NPC1L1 to the plasma membrane (PubMed:19542231). Participates in the sorting and basolateral transport of CDH1 from the Golgi apparatus to the plasma membrane (PubMed:15689490). Regulates the recycling of FCGRT (receptor of Fc region of monomeric IgG) to basolateral membranes (By similarity). May also play a role in melanosome transport and release from melanocytes (By similarity). Promotes Rabin8/RAB3IP preciliary vesicular trafficking to mother centriole by forming a ciliary targeting complex containing Rab11, ASAP1, Rabin8/RAB3IP, RAB11FIP3 and ARF4, thereby regulating ciliogenesis initiation (PubMed:25673879, PubMed:31204173). On the contrary, upon LPAR1 receptor signaling pathway activation, interaction with phosphorylated WDR44 prevents Rab11-RAB3IP-RAB11FIP3 complex formation and cilia growth (PubMed:31204173). Participates in the export of a subset of neosynthesized proteins through a Rab8-Rab10-Rab11-endososomal dependent export route via interaction with WDR44 (PubMed:32344433).</text>
</comment>
<comment type="catalytic activity">
    <reaction evidence="4">
        <text>GTP + H2O = GDP + phosphate + H(+)</text>
        <dbReference type="Rhea" id="RHEA:19669"/>
        <dbReference type="ChEBI" id="CHEBI:15377"/>
        <dbReference type="ChEBI" id="CHEBI:15378"/>
        <dbReference type="ChEBI" id="CHEBI:37565"/>
        <dbReference type="ChEBI" id="CHEBI:43474"/>
        <dbReference type="ChEBI" id="CHEBI:58189"/>
        <dbReference type="EC" id="3.6.5.2"/>
    </reaction>
    <physiologicalReaction direction="left-to-right" evidence="4">
        <dbReference type="Rhea" id="RHEA:19670"/>
    </physiologicalReaction>
</comment>
<comment type="cofactor">
    <cofactor evidence="19 20 22 23 24">
        <name>Mg(2+)</name>
        <dbReference type="ChEBI" id="CHEBI:18420"/>
    </cofactor>
</comment>
<comment type="activity regulation">
    <text evidence="56">Regulated by guanine nucleotide exchange factors (GEFs) which promote the exchange of bound GDP for free GTP (Probable). Regulated by GTPase activating proteins (GAPs) which increase the GTP hydrolysis activity (Probable). Inhibited by GDP dissociation inhibitors (GDIs) which prevent Rab-GDP dissociation (Probable).</text>
</comment>
<comment type="subunit">
    <text evidence="1 3 5 8 9 10 12 13 14 15 17 19 20 21 22 23 24 25 26 27 28 29 30 31 34 35 36 37 39 40 41 42 43 44 46 47 48 49 51">Interacts (GTP-bound form) with RAB11FIPs (via their C-termini) including RAB11FIP1, RAB11FIP2, RAB11FIP3, RAB11FIP4 and RAB11FIP5 effectors (PubMed:11495908, PubMed:11786538, PubMed:12470645, PubMed:15173169, PubMed:15181150, PubMed:15280022, PubMed:15601896, PubMed:16148947, PubMed:16905101, PubMed:17030804, PubMed:17229837, PubMed:20026645, PubMed:25673879, PubMed:26032412, PubMed:26258637, PubMed:31204173). Interacts with RAB11FIP5 and STXBP6. Interacts with SGSM1, SGSM2 and SGSM3 (By similarity). Interacts with EXOC6 in a GTP-dependent manner (By similarity). Forms a complex with RAB11FIP3 and dynein intermediate chain DYNC1LI1; the interaction between RAB11A1 and RAB11FIP3 is direct; the complex regulates endocytic trafficking (PubMed:20026645). Interacts with EVI5; EVI5 and RAB11FIP3 may be mutually exclusive and compete for binding RAB11A (By similarity). Interacts with STXBP6 (By similarity). Interacts with VIPAS39. Interacts with MYO5B. Found in a complex with MYO5B and CFTR. Interacts with NPC1L1. Interacts (GDP-bound form) with ZFYVE27 (PubMed:17082457, PubMed:21976701). Interacts with BIRC6/bruce. May interact with TBC1D14. Interacts with UNC119; in a cell cycle-dependent manner. GDP-bound and nucleotide-free forms interact with SH3BP5 (PubMed:26506309, PubMed:30217979). Interacts (GDP-bound form) with KIF5A in a ZFYVE27-dependent manner (PubMed:21976701). Interacts (GDP-bound form) with RELCH (By similarity). Found in a complex composed of RELCH, OSBP1 and RAB11A (By similarity). Interacts with TBC1D12 (PubMed:28384198). Interacts with DEF6 (PubMed:31308374). Interacts with VPS33B (PubMed:28017832). Interacts with ATP9A (PubMed:36604604). Forms a heterotetramer with RAB11FIP3; the GTP-bound form is preferred for binding (PubMed:26258637). Forms a complex with Rabin8/RAB3IP and RAB11FIP3, probably a heterohexamer with two of each protein subunit, where Rabin8/RAB3IP and RAB11FIP3 simultaneously bind to RAB11A; the complex promotes preciliary trafficking and cilia growth (PubMed:26258637, PubMed:31204173). Forms a complex containing RAB11A, ASAP1, Rabin8/RAB3IP, RAP11FIP3 and ARF4; the complex promotes preciliary trafficking; the complex binds to RHO in photoreceptor cells and promotes RHO ciliary transport (PubMed:25673879, PubMed:26258637). Interacts (GTP-bound form) with WDR44; the interaction prevents RAB11A-RAB3IP-RAB11FIP3 complex formation (PubMed:10077598, PubMed:31204173, PubMed:32344433).</text>
</comment>
<comment type="interaction">
    <interactant intactId="EBI-745098">
        <id>P62491</id>
    </interactant>
    <interactant intactId="EBI-10254793">
        <id>Q6XD76</id>
        <label>ASCL4</label>
    </interactant>
    <organismsDiffer>false</organismsDiffer>
    <experiments>3</experiments>
</comment>
<comment type="interaction">
    <interactant intactId="EBI-745098">
        <id>P62491</id>
    </interactant>
    <interactant intactId="EBI-2118090">
        <id>Q7LBR1</id>
        <label>CHMP1B</label>
    </interactant>
    <organismsDiffer>false</organismsDiffer>
    <experiments>3</experiments>
</comment>
<comment type="interaction">
    <interactant intactId="EBI-745098">
        <id>P62491</id>
    </interactant>
    <interactant intactId="EBI-852291">
        <id>O60447</id>
        <label>EVI5</label>
    </interactant>
    <organismsDiffer>false</organismsDiffer>
    <experiments>7</experiments>
</comment>
<comment type="interaction">
    <interactant intactId="EBI-745098">
        <id>P62491</id>
    </interactant>
    <interactant intactId="EBI-712105">
        <id>Q13352</id>
        <label>ITGB3BP</label>
    </interactant>
    <organismsDiffer>false</organismsDiffer>
    <experiments>3</experiments>
</comment>
<comment type="interaction">
    <interactant intactId="EBI-745098">
        <id>P62491</id>
    </interactant>
    <interactant intactId="EBI-2796400">
        <id>Q9UIH9</id>
        <label>KLF15</label>
    </interactant>
    <organismsDiffer>false</organismsDiffer>
    <experiments>3</experiments>
</comment>
<comment type="interaction">
    <interactant intactId="EBI-745098">
        <id>P62491</id>
    </interactant>
    <interactant intactId="EBI-14093244">
        <id>Q9ULV0-2</id>
        <label>MYO5B</label>
    </interactant>
    <organismsDiffer>false</organismsDiffer>
    <experiments>3</experiments>
</comment>
<comment type="interaction">
    <interactant intactId="EBI-745098">
        <id>P62491</id>
    </interactant>
    <interactant intactId="EBI-16107849">
        <id>Q9UBF8-2</id>
        <label>PI4KB</label>
    </interactant>
    <organismsDiffer>false</organismsDiffer>
    <experiments>5</experiments>
</comment>
<comment type="interaction">
    <interactant intactId="EBI-745098">
        <id>P62491</id>
    </interactant>
    <interactant intactId="EBI-1049676">
        <id>Q7L804</id>
        <label>RAB11FIP2</label>
    </interactant>
    <organismsDiffer>false</organismsDiffer>
    <experiments>16</experiments>
</comment>
<comment type="interaction">
    <interactant intactId="EBI-745098">
        <id>P62491</id>
    </interactant>
    <interactant intactId="EBI-15605207">
        <id>O75154-1</id>
        <label>RAB11FIP3</label>
    </interactant>
    <organismsDiffer>false</organismsDiffer>
    <experiments>16</experiments>
</comment>
<comment type="interaction">
    <interactant intactId="EBI-745098">
        <id>P62491</id>
    </interactant>
    <interactant intactId="EBI-15605259">
        <id>Q86YS3-1</id>
        <label>RAB11FIP4</label>
    </interactant>
    <organismsDiffer>false</organismsDiffer>
    <experiments>2</experiments>
</comment>
<comment type="interaction">
    <interactant intactId="EBI-745098">
        <id>P62491</id>
    </interactant>
    <interactant intactId="EBI-1387068">
        <id>Q9BXF6</id>
        <label>RAB11FIP5</label>
    </interactant>
    <organismsDiffer>false</organismsDiffer>
    <experiments>7</experiments>
</comment>
<comment type="interaction">
    <interactant intactId="EBI-745098">
        <id>P62491</id>
    </interactant>
    <interactant intactId="EBI-747865">
        <id>Q96QF0-2</id>
        <label>RAB3IP</label>
    </interactant>
    <organismsDiffer>false</organismsDiffer>
    <experiments>8</experiments>
</comment>
<comment type="interaction">
    <interactant intactId="EBI-745098">
        <id>P62491</id>
    </interactant>
    <interactant intactId="EBI-1044059">
        <id>P46937</id>
        <label>YAP1</label>
    </interactant>
    <organismsDiffer>false</organismsDiffer>
    <experiments>2</experiments>
</comment>
<comment type="interaction">
    <interactant intactId="EBI-745098">
        <id>P62491</id>
    </interactant>
    <interactant intactId="EBI-3892947">
        <id>Q5T4F4</id>
        <label>ZFYVE27</label>
    </interactant>
    <organismsDiffer>false</organismsDiffer>
    <experiments>4</experiments>
</comment>
<comment type="interaction">
    <interactant intactId="EBI-745098">
        <id>P62491</id>
    </interactant>
    <interactant intactId="EBI-749023">
        <id>Q9UNY5</id>
        <label>ZNF232</label>
    </interactant>
    <organismsDiffer>false</organismsDiffer>
    <experiments>3</experiments>
</comment>
<comment type="subcellular location">
    <subcellularLocation>
        <location evidence="16">Cell membrane</location>
        <topology evidence="57">Lipid-anchor</topology>
    </subcellularLocation>
    <subcellularLocation>
        <location evidence="49">Endosome membrane</location>
    </subcellularLocation>
    <subcellularLocation>
        <location evidence="11 14 30 45">Recycling endosome membrane</location>
        <topology evidence="57">Lipid-anchor</topology>
    </subcellularLocation>
    <subcellularLocation>
        <location evidence="17">Cleavage furrow</location>
    </subcellularLocation>
    <subcellularLocation>
        <location evidence="33">Cytoplasmic vesicle</location>
        <location evidence="33">Phagosome</location>
    </subcellularLocation>
    <subcellularLocation>
        <location evidence="46">Cytoplasmic vesicle membrane</location>
    </subcellularLocation>
    <subcellularLocation>
        <location evidence="39">Golgi apparatus</location>
    </subcellularLocation>
    <subcellularLocation>
        <location evidence="39">Golgi apparatus</location>
        <location evidence="39">trans-Golgi network</location>
    </subcellularLocation>
    <subcellularLocation>
        <location evidence="40">Cytoplasmic vesicle</location>
    </subcellularLocation>
    <text evidence="11 17 30 32 33 39 40 49">Localized to WDR44-positive endosomes and tubules (PubMed:32344433). Translocates with RAB11FIP2 from the vesicles of the endocytic recycling compartment (ERC) to the plasma membrane (PubMed:11994279). During interphase, localized in vesicles continuously moving from peripheral sorting endosomes towards the pericentrosomal ERC (PubMed:20026645). Localizes to the cleavage furrow (PubMed:15601896). Colocalizes with PARD3, PRKCI, EXOC5, OCLN, PODXL and RAB8A in apical membrane initiation sites (AMIS) during the generation of apical surface and lumenogenesis (PubMed:20890297). Recruited to phagosomes containing S.aureus or M.tuberculosis (PubMed:21255211). Localized to rhodopsin transport carriers when interacting with RAB11AFIP3 and ASAP1 in photoreceptors (PubMed:25673879). Colocalizes with RAB11AFIP1 on punctate vesicles (PubMed:26032412).</text>
</comment>
<comment type="alternative products">
    <event type="alternative splicing"/>
    <isoform>
        <id>P62491-1</id>
        <name>1</name>
        <sequence type="displayed"/>
    </isoform>
    <isoform>
        <id>P62491-2</id>
        <name>2</name>
        <sequence type="described" ref="VSP_046755"/>
    </isoform>
</comment>
<comment type="domain">
    <text evidence="23">Switch 1, switch 2 and the interswitch regions are characteristic of Rab GTPases and mediate the interactions with Rab downstream effectors. The switch regions undergo conformational changes upon nucleotide binding which drives interaction with specific sets of effector proteins, with most effectors only binding to GTP-bound Rab.</text>
</comment>
<comment type="PTM">
    <text evidence="50">(Microbial infection) Glycosylated on arginine residues by S.typhimurium protein Ssek3.</text>
</comment>
<comment type="similarity">
    <text evidence="56">Belongs to the small GTPase superfamily. Rab family.</text>
</comment>
<reference key="1">
    <citation type="journal article" date="1991" name="Oncogene">
        <title>Identification and characterization of a human homolog of the Schizosaccharomyces pombe ras-like gene YPT-3.</title>
        <authorList>
            <person name="Drivas G.T."/>
            <person name="Shih A."/>
            <person name="Coutavas E.E."/>
            <person name="D'Eustachio P."/>
            <person name="Rush M.G."/>
        </authorList>
    </citation>
    <scope>NUCLEOTIDE SEQUENCE [MRNA] (ISOFORM 1)</scope>
</reference>
<reference key="2">
    <citation type="submission" date="1990-11" db="EMBL/GenBank/DDBJ databases">
        <authorList>
            <person name="Zahraoui A."/>
            <person name="Joberty G."/>
            <person name="Tavitian A."/>
        </authorList>
    </citation>
    <scope>NUCLEOTIDE SEQUENCE [MRNA] (ISOFORM 1)</scope>
</reference>
<reference key="3">
    <citation type="journal article" date="1998" name="FEBS Lett.">
        <title>Human rab11a: transcription, chromosome mapping and effect on the expression levels of host GTP-binding proteins.</title>
        <authorList>
            <person name="Gromov P.S."/>
            <person name="Celis J.E."/>
            <person name="Hansen C."/>
            <person name="Tommerup N."/>
            <person name="Gromova I."/>
            <person name="Madsen P."/>
        </authorList>
    </citation>
    <scope>NUCLEOTIDE SEQUENCE [MRNA] (ISOFORM 1)</scope>
</reference>
<reference key="4">
    <citation type="submission" date="2002-04" db="EMBL/GenBank/DDBJ databases">
        <title>cDNA clones of human proteins involved in signal transduction sequenced by the Guthrie cDNA resource center (www.cdna.org).</title>
        <authorList>
            <person name="Puhl H.L. III"/>
            <person name="Ikeda S.R."/>
            <person name="Aronstam R.S."/>
        </authorList>
    </citation>
    <scope>NUCLEOTIDE SEQUENCE [LARGE SCALE MRNA] (ISOFORM 1)</scope>
    <source>
        <tissue>Brain</tissue>
    </source>
</reference>
<reference key="5">
    <citation type="submission" date="2004-06" db="EMBL/GenBank/DDBJ databases">
        <title>Cloning of human full open reading frames in Gateway(TM) system entry vector (pDONR201).</title>
        <authorList>
            <person name="Ebert L."/>
            <person name="Schick M."/>
            <person name="Neubert P."/>
            <person name="Schatten R."/>
            <person name="Henze S."/>
            <person name="Korn B."/>
        </authorList>
    </citation>
    <scope>NUCLEOTIDE SEQUENCE [LARGE SCALE MRNA] (ISOFORM 1)</scope>
</reference>
<reference key="6">
    <citation type="submission" date="2004-10" db="EMBL/GenBank/DDBJ databases">
        <title>Cloning of human full-length CDSs in BD Creator(TM) system donor vector.</title>
        <authorList>
            <person name="Kalnine N."/>
            <person name="Chen X."/>
            <person name="Rolfs A."/>
            <person name="Halleck A."/>
            <person name="Hines L."/>
            <person name="Eisenstein S."/>
            <person name="Koundinya M."/>
            <person name="Raphael J."/>
            <person name="Moreira D."/>
            <person name="Kelley T."/>
            <person name="LaBaer J."/>
            <person name="Lin Y."/>
            <person name="Phelan M."/>
            <person name="Farmer A."/>
        </authorList>
    </citation>
    <scope>NUCLEOTIDE SEQUENCE [LARGE SCALE MRNA] (ISOFORM 1)</scope>
</reference>
<reference key="7">
    <citation type="journal article" date="2004" name="Nat. Genet.">
        <title>Complete sequencing and characterization of 21,243 full-length human cDNAs.</title>
        <authorList>
            <person name="Ota T."/>
            <person name="Suzuki Y."/>
            <person name="Nishikawa T."/>
            <person name="Otsuki T."/>
            <person name="Sugiyama T."/>
            <person name="Irie R."/>
            <person name="Wakamatsu A."/>
            <person name="Hayashi K."/>
            <person name="Sato H."/>
            <person name="Nagai K."/>
            <person name="Kimura K."/>
            <person name="Makita H."/>
            <person name="Sekine M."/>
            <person name="Obayashi M."/>
            <person name="Nishi T."/>
            <person name="Shibahara T."/>
            <person name="Tanaka T."/>
            <person name="Ishii S."/>
            <person name="Yamamoto J."/>
            <person name="Saito K."/>
            <person name="Kawai Y."/>
            <person name="Isono Y."/>
            <person name="Nakamura Y."/>
            <person name="Nagahari K."/>
            <person name="Murakami K."/>
            <person name="Yasuda T."/>
            <person name="Iwayanagi T."/>
            <person name="Wagatsuma M."/>
            <person name="Shiratori A."/>
            <person name="Sudo H."/>
            <person name="Hosoiri T."/>
            <person name="Kaku Y."/>
            <person name="Kodaira H."/>
            <person name="Kondo H."/>
            <person name="Sugawara M."/>
            <person name="Takahashi M."/>
            <person name="Kanda K."/>
            <person name="Yokoi T."/>
            <person name="Furuya T."/>
            <person name="Kikkawa E."/>
            <person name="Omura Y."/>
            <person name="Abe K."/>
            <person name="Kamihara K."/>
            <person name="Katsuta N."/>
            <person name="Sato K."/>
            <person name="Tanikawa M."/>
            <person name="Yamazaki M."/>
            <person name="Ninomiya K."/>
            <person name="Ishibashi T."/>
            <person name="Yamashita H."/>
            <person name="Murakawa K."/>
            <person name="Fujimori K."/>
            <person name="Tanai H."/>
            <person name="Kimata M."/>
            <person name="Watanabe M."/>
            <person name="Hiraoka S."/>
            <person name="Chiba Y."/>
            <person name="Ishida S."/>
            <person name="Ono Y."/>
            <person name="Takiguchi S."/>
            <person name="Watanabe S."/>
            <person name="Yosida M."/>
            <person name="Hotuta T."/>
            <person name="Kusano J."/>
            <person name="Kanehori K."/>
            <person name="Takahashi-Fujii A."/>
            <person name="Hara H."/>
            <person name="Tanase T.-O."/>
            <person name="Nomura Y."/>
            <person name="Togiya S."/>
            <person name="Komai F."/>
            <person name="Hara R."/>
            <person name="Takeuchi K."/>
            <person name="Arita M."/>
            <person name="Imose N."/>
            <person name="Musashino K."/>
            <person name="Yuuki H."/>
            <person name="Oshima A."/>
            <person name="Sasaki N."/>
            <person name="Aotsuka S."/>
            <person name="Yoshikawa Y."/>
            <person name="Matsunawa H."/>
            <person name="Ichihara T."/>
            <person name="Shiohata N."/>
            <person name="Sano S."/>
            <person name="Moriya S."/>
            <person name="Momiyama H."/>
            <person name="Satoh N."/>
            <person name="Takami S."/>
            <person name="Terashima Y."/>
            <person name="Suzuki O."/>
            <person name="Nakagawa S."/>
            <person name="Senoh A."/>
            <person name="Mizoguchi H."/>
            <person name="Goto Y."/>
            <person name="Shimizu F."/>
            <person name="Wakebe H."/>
            <person name="Hishigaki H."/>
            <person name="Watanabe T."/>
            <person name="Sugiyama A."/>
            <person name="Takemoto M."/>
            <person name="Kawakami B."/>
            <person name="Yamazaki M."/>
            <person name="Watanabe K."/>
            <person name="Kumagai A."/>
            <person name="Itakura S."/>
            <person name="Fukuzumi Y."/>
            <person name="Fujimori Y."/>
            <person name="Komiyama M."/>
            <person name="Tashiro H."/>
            <person name="Tanigami A."/>
            <person name="Fujiwara T."/>
            <person name="Ono T."/>
            <person name="Yamada K."/>
            <person name="Fujii Y."/>
            <person name="Ozaki K."/>
            <person name="Hirao M."/>
            <person name="Ohmori Y."/>
            <person name="Kawabata A."/>
            <person name="Hikiji T."/>
            <person name="Kobatake N."/>
            <person name="Inagaki H."/>
            <person name="Ikema Y."/>
            <person name="Okamoto S."/>
            <person name="Okitani R."/>
            <person name="Kawakami T."/>
            <person name="Noguchi S."/>
            <person name="Itoh T."/>
            <person name="Shigeta K."/>
            <person name="Senba T."/>
            <person name="Matsumura K."/>
            <person name="Nakajima Y."/>
            <person name="Mizuno T."/>
            <person name="Morinaga M."/>
            <person name="Sasaki M."/>
            <person name="Togashi T."/>
            <person name="Oyama M."/>
            <person name="Hata H."/>
            <person name="Watanabe M."/>
            <person name="Komatsu T."/>
            <person name="Mizushima-Sugano J."/>
            <person name="Satoh T."/>
            <person name="Shirai Y."/>
            <person name="Takahashi Y."/>
            <person name="Nakagawa K."/>
            <person name="Okumura K."/>
            <person name="Nagase T."/>
            <person name="Nomura N."/>
            <person name="Kikuchi H."/>
            <person name="Masuho Y."/>
            <person name="Yamashita R."/>
            <person name="Nakai K."/>
            <person name="Yada T."/>
            <person name="Nakamura Y."/>
            <person name="Ohara O."/>
            <person name="Isogai T."/>
            <person name="Sugano S."/>
        </authorList>
    </citation>
    <scope>NUCLEOTIDE SEQUENCE [LARGE SCALE MRNA] (ISOFORMS 1 AND 2)</scope>
    <source>
        <tissue>Brain</tissue>
    </source>
</reference>
<reference key="8">
    <citation type="journal article" date="2006" name="Nature">
        <title>Analysis of the DNA sequence and duplication history of human chromosome 15.</title>
        <authorList>
            <person name="Zody M.C."/>
            <person name="Garber M."/>
            <person name="Sharpe T."/>
            <person name="Young S.K."/>
            <person name="Rowen L."/>
            <person name="O'Neill K."/>
            <person name="Whittaker C.A."/>
            <person name="Kamal M."/>
            <person name="Chang J.L."/>
            <person name="Cuomo C.A."/>
            <person name="Dewar K."/>
            <person name="FitzGerald M.G."/>
            <person name="Kodira C.D."/>
            <person name="Madan A."/>
            <person name="Qin S."/>
            <person name="Yang X."/>
            <person name="Abbasi N."/>
            <person name="Abouelleil A."/>
            <person name="Arachchi H.M."/>
            <person name="Baradarani L."/>
            <person name="Birditt B."/>
            <person name="Bloom S."/>
            <person name="Bloom T."/>
            <person name="Borowsky M.L."/>
            <person name="Burke J."/>
            <person name="Butler J."/>
            <person name="Cook A."/>
            <person name="DeArellano K."/>
            <person name="DeCaprio D."/>
            <person name="Dorris L. III"/>
            <person name="Dors M."/>
            <person name="Eichler E.E."/>
            <person name="Engels R."/>
            <person name="Fahey J."/>
            <person name="Fleetwood P."/>
            <person name="Friedman C."/>
            <person name="Gearin G."/>
            <person name="Hall J.L."/>
            <person name="Hensley G."/>
            <person name="Johnson E."/>
            <person name="Jones C."/>
            <person name="Kamat A."/>
            <person name="Kaur A."/>
            <person name="Locke D.P."/>
            <person name="Madan A."/>
            <person name="Munson G."/>
            <person name="Jaffe D.B."/>
            <person name="Lui A."/>
            <person name="Macdonald P."/>
            <person name="Mauceli E."/>
            <person name="Naylor J.W."/>
            <person name="Nesbitt R."/>
            <person name="Nicol R."/>
            <person name="O'Leary S.B."/>
            <person name="Ratcliffe A."/>
            <person name="Rounsley S."/>
            <person name="She X."/>
            <person name="Sneddon K.M.B."/>
            <person name="Stewart S."/>
            <person name="Sougnez C."/>
            <person name="Stone S.M."/>
            <person name="Topham K."/>
            <person name="Vincent D."/>
            <person name="Wang S."/>
            <person name="Zimmer A.R."/>
            <person name="Birren B.W."/>
            <person name="Hood L."/>
            <person name="Lander E.S."/>
            <person name="Nusbaum C."/>
        </authorList>
    </citation>
    <scope>NUCLEOTIDE SEQUENCE [LARGE SCALE GENOMIC DNA]</scope>
</reference>
<reference key="9">
    <citation type="submission" date="2005-07" db="EMBL/GenBank/DDBJ databases">
        <authorList>
            <person name="Mural R.J."/>
            <person name="Istrail S."/>
            <person name="Sutton G.G."/>
            <person name="Florea L."/>
            <person name="Halpern A.L."/>
            <person name="Mobarry C.M."/>
            <person name="Lippert R."/>
            <person name="Walenz B."/>
            <person name="Shatkay H."/>
            <person name="Dew I."/>
            <person name="Miller J.R."/>
            <person name="Flanigan M.J."/>
            <person name="Edwards N.J."/>
            <person name="Bolanos R."/>
            <person name="Fasulo D."/>
            <person name="Halldorsson B.V."/>
            <person name="Hannenhalli S."/>
            <person name="Turner R."/>
            <person name="Yooseph S."/>
            <person name="Lu F."/>
            <person name="Nusskern D.R."/>
            <person name="Shue B.C."/>
            <person name="Zheng X.H."/>
            <person name="Zhong F."/>
            <person name="Delcher A.L."/>
            <person name="Huson D.H."/>
            <person name="Kravitz S.A."/>
            <person name="Mouchard L."/>
            <person name="Reinert K."/>
            <person name="Remington K.A."/>
            <person name="Clark A.G."/>
            <person name="Waterman M.S."/>
            <person name="Eichler E.E."/>
            <person name="Adams M.D."/>
            <person name="Hunkapiller M.W."/>
            <person name="Myers E.W."/>
            <person name="Venter J.C."/>
        </authorList>
    </citation>
    <scope>NUCLEOTIDE SEQUENCE [LARGE SCALE GENOMIC DNA]</scope>
</reference>
<reference key="10">
    <citation type="journal article" date="2004" name="Genome Res.">
        <title>The status, quality, and expansion of the NIH full-length cDNA project: the Mammalian Gene Collection (MGC).</title>
        <authorList>
            <consortium name="The MGC Project Team"/>
        </authorList>
    </citation>
    <scope>NUCLEOTIDE SEQUENCE [LARGE SCALE MRNA] (ISOFORM 1)</scope>
    <source>
        <tissue>Brain</tissue>
    </source>
</reference>
<reference key="11">
    <citation type="submission" date="2005-10" db="UniProtKB">
        <authorList>
            <person name="Bienvenut W.V."/>
        </authorList>
    </citation>
    <scope>PROTEIN SEQUENCE OF 2-24; 34-58; 62-72; 75-95 AND 133-140</scope>
    <scope>CLEAVAGE OF INITIATOR METHIONINE</scope>
    <scope>ACETYLATION AT GLY-2</scope>
    <scope>IDENTIFICATION BY MASS SPECTROMETRY</scope>
    <source>
        <tissue>B-cell lymphoma</tissue>
        <tissue>Platelet</tissue>
    </source>
</reference>
<reference key="12">
    <citation type="journal article" date="1999" name="Proc. Natl. Acad. Sci. U.S.A.">
        <title>Identification of a putative effector protein for rab11 that participates in transferrin recycling.</title>
        <authorList>
            <person name="Zeng J."/>
            <person name="Ren M."/>
            <person name="Gravotta D."/>
            <person name="De Lemos-Chiarandini C."/>
            <person name="Tempst P."/>
            <person name="Erdjument-Bromage H."/>
            <person name="Liu M."/>
            <person name="Xu G."/>
            <person name="Shen T."/>
            <person name="Morimoto T."/>
            <person name="Adesnik M."/>
            <person name="Sabatini D.D."/>
        </authorList>
    </citation>
    <scope>INTERACTION WITH WDR44</scope>
</reference>
<reference key="13">
    <citation type="journal article" date="2001" name="J. Biol. Chem.">
        <title>Identification and characterization of a family of Rab11-interacting proteins.</title>
        <authorList>
            <person name="Hales C.M."/>
            <person name="Griner R."/>
            <person name="Hobdy-Henderson K.C."/>
            <person name="Dorn M.C."/>
            <person name="Hardy D."/>
            <person name="Kumar R."/>
            <person name="Navarre J."/>
            <person name="Chan E.K.L."/>
            <person name="Lapierre L.A."/>
            <person name="Goldenring J.R."/>
        </authorList>
    </citation>
    <scope>INTERACTION WITH RAB11FIP1; RAB11FIP2; RAB11FIP3 AND RAB11FIP4</scope>
</reference>
<reference key="14">
    <citation type="journal article" date="2002" name="Biochem. Biophys. Res. Commun.">
        <title>Rab11-FIP4 interacts with Rab11 in a GTP-dependent manner and its overexpression condenses the Rab11 positive compartment in HeLa cells.</title>
        <authorList>
            <person name="Wallace D.M."/>
            <person name="Lindsay A.J."/>
            <person name="Hendrick A.G."/>
            <person name="McCaffrey M.W."/>
        </authorList>
    </citation>
    <scope>INTERACTION WITH RAB11FIP4</scope>
</reference>
<reference key="15">
    <citation type="journal article" date="2002" name="J. Biol. Chem.">
        <title>Rab coupling protein (RCP), a novel Rab4 and Rab11 effector protein.</title>
        <authorList>
            <person name="Lindsay A.J."/>
            <person name="Hendrick A.G."/>
            <person name="Cantalupo G."/>
            <person name="Senic-Matuglia F."/>
            <person name="Goud B."/>
            <person name="Bucci C."/>
            <person name="McCaffrey M.W."/>
        </authorList>
    </citation>
    <scope>INTERACTION WITH RAB11FIP4</scope>
    <source>
        <tissue>Cervix carcinoma</tissue>
    </source>
</reference>
<reference key="16">
    <citation type="journal article" date="2002" name="J. Biol. Chem.">
        <title>Rab11-FIP2 functions in transferrin recycling and associates with endosomal membranes via its COOH-terminal domain.</title>
        <authorList>
            <person name="Lindsay A.J."/>
            <person name="McCaffrey M.W."/>
        </authorList>
    </citation>
    <scope>SUBCELLULAR LOCATION</scope>
</reference>
<reference key="17">
    <citation type="journal article" date="2004" name="FEBS Lett.">
        <title>Characterisation of the Rab binding properties of Rab coupling protein (RCP) by site-directed mutagenesis.</title>
        <authorList>
            <person name="Lindsay A.J."/>
            <person name="McCaffrey M.W."/>
        </authorList>
    </citation>
    <scope>INTERACTION WITH RAB11FIP1</scope>
</reference>
<reference key="18">
    <citation type="journal article" date="2004" name="J. Biol. Chem.">
        <title>Molecular characterization of Rab11 interactions with members of the family of Rab11-interacting proteins.</title>
        <authorList>
            <person name="Junutula J.R."/>
            <person name="Schonteich E."/>
            <person name="Wilson G.M."/>
            <person name="Peden A.A."/>
            <person name="Scheller R.H."/>
            <person name="Prekeris R."/>
        </authorList>
    </citation>
    <scope>INTERACTION WITH RAB11FIP2</scope>
</reference>
<reference key="19">
    <citation type="journal article" date="2004" name="J. Cell Sci.">
        <title>The C2 domains of the class I Rab11 family of interacting proteins target recycling vesicles to the plasma membrane.</title>
        <authorList>
            <person name="Lindsay A.J."/>
            <person name="McCaffrey M.W."/>
        </authorList>
    </citation>
    <scope>SUBCELLULAR LOCATION</scope>
</reference>
<reference key="20">
    <citation type="journal article" date="2004" name="Mol. Biol. Cell">
        <title>The RCP-Rab11 complex regulates endocytic protein sorting.</title>
        <authorList>
            <person name="Peden A.A."/>
            <person name="Schonteich E."/>
            <person name="Chun J."/>
            <person name="Junutula J.R."/>
            <person name="Scheller R.H."/>
            <person name="Prekeris R."/>
        </authorList>
    </citation>
    <scope>INTERACTION WITH RAB11FIP1</scope>
    <scope>SUBCELLULAR LOCATION</scope>
</reference>
<reference key="21">
    <citation type="journal article" date="2005" name="EMBO J.">
        <title>Rab11-FIP3 and FIP4 interact with Arf6 and the exocyst to control membrane traffic in cytokinesis.</title>
        <authorList>
            <person name="Fielding A.B."/>
            <person name="Schonteich E."/>
            <person name="Matheson J."/>
            <person name="Wilson G."/>
            <person name="Yu X."/>
            <person name="Hickson G.R."/>
            <person name="Srivastava S."/>
            <person name="Baldwin S.A."/>
            <person name="Prekeris R."/>
            <person name="Gould G.W."/>
        </authorList>
    </citation>
    <scope>INTERACTION WITH RAB11FIP3 AND RAB11FIP4</scope>
</reference>
<reference key="22">
    <citation type="journal article" date="2005" name="Mol. Biol. Cell">
        <title>The FIP3-Rab11 protein complex regulates recycling endosome targeting to the cleavage furrow during late cytokinesis.</title>
        <authorList>
            <person name="Wilson G.M."/>
            <person name="Fielding A.B."/>
            <person name="Simon G.C."/>
            <person name="Yu X."/>
            <person name="Andrews P.D."/>
            <person name="Hames R.S."/>
            <person name="Frey A.M."/>
            <person name="Peden A.A."/>
            <person name="Gould G.W."/>
            <person name="Prekeris R."/>
        </authorList>
    </citation>
    <scope>FUNCTION</scope>
    <scope>SUBCELLULAR LOCATION</scope>
    <scope>INTERACTION WITH RAB11FIP3 AND RAB11FIP4</scope>
    <scope>MUTAGENESIS OF SER-25</scope>
</reference>
<reference key="23">
    <citation type="journal article" date="2005" name="Mol. Biol. Cell">
        <title>Rab11 in recycling endosomes regulates the sorting and basolateral transport of E-cadherin.</title>
        <authorList>
            <person name="Lock J.G."/>
            <person name="Stow J.L."/>
        </authorList>
    </citation>
    <scope>FUNCTION</scope>
    <scope>MUTAGENESIS OF SER-25 AND GLN-70</scope>
</reference>
<reference key="24">
    <citation type="journal article" date="2006" name="Science">
        <title>Protrudin induces neurite formation by directional membrane trafficking.</title>
        <authorList>
            <person name="Shirane M."/>
            <person name="Nakayama K.I."/>
        </authorList>
    </citation>
    <scope>INTERACTION WITH ZFYVE27</scope>
</reference>
<reference key="25">
    <citation type="journal article" date="2007" name="J. Biol. Chem.">
        <title>Myosin Vb is required for trafficking of the cystic fibrosis transmembrane conductance regulator in Rab11a-specific apical recycling endosomes in polarized human airway epithelial cells.</title>
        <authorList>
            <person name="Swiatecka-Urban A."/>
            <person name="Talebian L."/>
            <person name="Kanno E."/>
            <person name="Moreau-Marquis S."/>
            <person name="Coutermarsh B."/>
            <person name="Hansen K."/>
            <person name="Karlson K.H."/>
            <person name="Barnaby R."/>
            <person name="Cheney R.E."/>
            <person name="Langford G.M."/>
            <person name="Fukuda M."/>
            <person name="Stanton B.A."/>
        </authorList>
    </citation>
    <scope>FUNCTION</scope>
    <scope>INTERACTION WITH MYO5B</scope>
    <scope>IDENTIFICATION IN A COMPLEX WITH MYO5B AND CFTR</scope>
</reference>
<reference key="26">
    <citation type="journal article" date="2007" name="Proc. Natl. Acad. Sci. U.S.A.">
        <title>Identification of Rab11 as a small GTPase binding protein for the Evi5 oncogene.</title>
        <authorList>
            <person name="Westlake C.J."/>
            <person name="Junutula J.R."/>
            <person name="Simon G.C."/>
            <person name="Pilli M."/>
            <person name="Prekeris R."/>
            <person name="Scheller R.H."/>
            <person name="Jackson P.K."/>
            <person name="Eldridge A.G."/>
        </authorList>
    </citation>
    <scope>INTERACTION WITH RAB11FIP3 AND EVI5</scope>
</reference>
<reference key="27">
    <citation type="journal article" date="2008" name="Cell">
        <title>Final stages of cytokinesis and midbody ring formation are controlled by BRUCE.</title>
        <authorList>
            <person name="Pohl C."/>
            <person name="Jentsch S."/>
        </authorList>
    </citation>
    <scope>INTERACTION WITH BIRC6/BRUCE</scope>
</reference>
<reference key="28">
    <citation type="journal article" date="2009" name="J. Biol. Chem.">
        <title>Requirement of myosin Vb.Rab11a.Rab11-FIP2 complex in cholesterol-regulated translocation of NPC1L1 to the cell surface.</title>
        <authorList>
            <person name="Chu B.-B."/>
            <person name="Ge L."/>
            <person name="Xie C."/>
            <person name="Zhao Y."/>
            <person name="Miao H.-H."/>
            <person name="Wang J."/>
            <person name="Li B.-L."/>
            <person name="Song B.-L."/>
        </authorList>
    </citation>
    <scope>FUNCTION</scope>
    <scope>INTERACTION WITH NPC1L1</scope>
    <scope>MUTAGENESIS OF SER-25</scope>
</reference>
<reference key="29">
    <citation type="journal article" date="2010" name="J. Cell Sci.">
        <title>Rab11-FIP3 links the Rab11 GTPase and cytoplasmic dynein to mediate transport to the endosomal-recycling compartment.</title>
        <authorList>
            <person name="Horgan C.P."/>
            <person name="Hanscom S.R."/>
            <person name="Jolly R.S."/>
            <person name="Futter C.E."/>
            <person name="McCaffrey M.W."/>
        </authorList>
    </citation>
    <scope>FUNCTION</scope>
    <scope>INTERACTION WITH RAB11FIP3</scope>
    <scope>SUBCELLULAR LOCATION</scope>
</reference>
<reference key="30">
    <citation type="journal article" date="2010" name="Nat. Cell Biol.">
        <title>A molecular network for de novo generation of the apical surface and lumen.</title>
        <authorList>
            <person name="Bryant D.M."/>
            <person name="Datta A."/>
            <person name="Rodriguez-Fraticelli A.E."/>
            <person name="Peraenen J."/>
            <person name="Martin-Belmonte F."/>
            <person name="Mostov K.E."/>
        </authorList>
    </citation>
    <scope>FUNCTION</scope>
    <scope>SUBCELLULAR LOCATION</scope>
</reference>
<reference key="31">
    <citation type="journal article" date="2010" name="Nat. Genet.">
        <title>Mutations in VIPAR cause an arthrogryposis, renal dysfunction and cholestasis syndrome phenotype with defects in epithelial polarization.</title>
        <authorList>
            <person name="Cullinane A.R."/>
            <person name="Straatman-Iwanowska A."/>
            <person name="Zaucker A."/>
            <person name="Wakabayashi Y."/>
            <person name="Bruce C.K."/>
            <person name="Luo G."/>
            <person name="Rahman F."/>
            <person name="Gurakan F."/>
            <person name="Utine E."/>
            <person name="Ozkan T.B."/>
            <person name="Denecke J."/>
            <person name="Vukovic J."/>
            <person name="Di Rocco M."/>
            <person name="Mandel H."/>
            <person name="Cangul H."/>
            <person name="Matthews R.P."/>
            <person name="Thomas S.G."/>
            <person name="Rappoport J.Z."/>
            <person name="Arias I.M."/>
            <person name="Wolburg H."/>
            <person name="Knisely A.S."/>
            <person name="Kelly D.A."/>
            <person name="Muller F."/>
            <person name="Maher E.R."/>
            <person name="Gissen P."/>
        </authorList>
    </citation>
    <scope>INTERACTION WITH VIPAS39</scope>
</reference>
<reference key="32">
    <citation type="journal article" date="2011" name="BMC Syst. Biol.">
        <title>Initial characterization of the human central proteome.</title>
        <authorList>
            <person name="Burkard T.R."/>
            <person name="Planyavsky M."/>
            <person name="Kaupe I."/>
            <person name="Breitwieser F.P."/>
            <person name="Buerckstuemmer T."/>
            <person name="Bennett K.L."/>
            <person name="Superti-Furga G."/>
            <person name="Colinge J."/>
        </authorList>
    </citation>
    <scope>IDENTIFICATION BY MASS SPECTROMETRY [LARGE SCALE ANALYSIS]</scope>
</reference>
<reference key="33">
    <citation type="journal article" date="2011" name="Mol. Biol. Cell">
        <title>Protrudin serves as an adaptor molecule that connects KIF5 and its cargoes in vesicular transport during process formation.</title>
        <authorList>
            <person name="Matsuzaki F."/>
            <person name="Shirane M."/>
            <person name="Matsumoto M."/>
            <person name="Nakayama K.I."/>
        </authorList>
    </citation>
    <scope>INTERACTION WITH ZFYVE27 AND KIF5A</scope>
</reference>
<reference key="34">
    <citation type="journal article" date="2011" name="Proc. Natl. Acad. Sci. U.S.A.">
        <title>Rab GTPase-Myo5B complexes control membrane recycling and epithelial polarization.</title>
        <authorList>
            <person name="Roland J.T."/>
            <person name="Bryant D.M."/>
            <person name="Datta A."/>
            <person name="Itzen A."/>
            <person name="Mostov K.E."/>
            <person name="Goldenring J.R."/>
        </authorList>
    </citation>
    <scope>FUNCTION</scope>
    <scope>INTERACTION WITH MYO5B</scope>
</reference>
<reference key="35">
    <citation type="journal article" date="2011" name="Traffic">
        <title>Rab GTPases regulating phagosome maturation are differentially recruited to mycobacterial phagosomes.</title>
        <authorList>
            <person name="Seto S."/>
            <person name="Tsujimura K."/>
            <person name="Koide Y."/>
        </authorList>
    </citation>
    <scope>SUBCELLULAR LOCATION</scope>
</reference>
<reference key="36">
    <citation type="journal article" date="2012" name="J. Cell Biol.">
        <title>TBC1D14 regulates autophagosome formation via Rab11- and ULK1-positive recycling endosomes.</title>
        <authorList>
            <person name="Longatti A."/>
            <person name="Lamb C.A."/>
            <person name="Razi M."/>
            <person name="Yoshimura S."/>
            <person name="Barr F.A."/>
            <person name="Tooze S.A."/>
        </authorList>
    </citation>
    <scope>INTERACTION WITH TBC1D14</scope>
</reference>
<reference key="37">
    <citation type="journal article" date="2013" name="Cell Cycle">
        <title>UNC119a bridges the transmission of Fyn signals to Rab11, leading to the completion of cytokinesis.</title>
        <authorList>
            <person name="Lee Y."/>
            <person name="Chung S."/>
            <person name="Baek I.K."/>
            <person name="Lee T.H."/>
            <person name="Paik S.Y."/>
            <person name="Lee J."/>
        </authorList>
    </citation>
    <scope>INTERACTION WITH UNC119</scope>
</reference>
<reference key="38">
    <citation type="journal article" date="2013" name="Mol. Cell. Proteomics">
        <title>Large-scale top down proteomics of the human proteome: membrane proteins, mitochondria, and senescence.</title>
        <authorList>
            <person name="Catherman A.D."/>
            <person name="Durbin K.R."/>
            <person name="Ahlf D.R."/>
            <person name="Early B.P."/>
            <person name="Fellers R.T."/>
            <person name="Tran J.C."/>
            <person name="Thomas P.M."/>
            <person name="Kelleher N.L."/>
        </authorList>
    </citation>
    <scope>ISOPRENYLATION AT CYS-212 AND CYS-213</scope>
    <scope>IDENTIFICATION BY MASS SPECTROMETRY</scope>
</reference>
<reference key="39">
    <citation type="journal article" date="2015" name="Dev. Cell">
        <title>REI-1 is a guanine nucleotide exchange factor regulating RAB-11 localization and function in C. elegans embryos.</title>
        <authorList>
            <person name="Sakaguchi A."/>
            <person name="Sato M."/>
            <person name="Sato K."/>
            <person name="Gengyo-Ando K."/>
            <person name="Yorimitsu T."/>
            <person name="Nakai J."/>
            <person name="Hara T."/>
            <person name="Sato K."/>
            <person name="Sato K."/>
        </authorList>
    </citation>
    <scope>INTERACTION WITH SH3BP5</scope>
</reference>
<reference key="40">
    <citation type="journal article" date="2015" name="J. Biol. Chem.">
        <title>Structure-Function Analyses of the Interactions between Rab11 and Rab14 Small GTPases with Their Shared Effector Rab Coupling Protein (RCP).</title>
        <authorList>
            <person name="Lall P."/>
            <person name="Lindsay A.J."/>
            <person name="Hanscom S."/>
            <person name="Kecman T."/>
            <person name="Taglauer E.S."/>
            <person name="McVeigh U.M."/>
            <person name="Franklin E."/>
            <person name="McCaffrey M.W."/>
            <person name="Khan A.R."/>
        </authorList>
    </citation>
    <scope>FUNCTION</scope>
    <scope>INTERACTION WITH RAB11FIP1</scope>
    <scope>SUBCELLULAR LOCATION</scope>
</reference>
<reference key="41">
    <citation type="journal article" date="2015" name="J. Cell Sci.">
        <title>The Arf and Rab11 effector FIP3 acts synergistically with ASAP1 to direct Rabin8 in ciliary receptor targeting.</title>
        <authorList>
            <person name="Wang J."/>
            <person name="Deretic D."/>
        </authorList>
    </citation>
    <scope>FUNCTION</scope>
    <scope>INTERACTION WITH RAB11FIP3; ARF4; ASAP1; RAB3IP AND RHO</scope>
    <scope>SUBCELLULAR LOCATION</scope>
</reference>
<reference key="42">
    <citation type="journal article" date="2015" name="Proteomics">
        <title>N-terminome analysis of the human mitochondrial proteome.</title>
        <authorList>
            <person name="Vaca Jacome A.S."/>
            <person name="Rabilloud T."/>
            <person name="Schaeffer-Reiss C."/>
            <person name="Rompais M."/>
            <person name="Ayoub D."/>
            <person name="Lane L."/>
            <person name="Bairoch A."/>
            <person name="Van Dorsselaer A."/>
            <person name="Carapito C."/>
        </authorList>
    </citation>
    <scope>IDENTIFICATION BY MASS SPECTROMETRY [LARGE SCALE ANALYSIS]</scope>
</reference>
<reference key="43">
    <citation type="journal article" date="2017" name="J. Invest. Dermatol.">
        <title>Autosomal Recessive Keratoderma-Ichthyosis-Deafness (ARKID) Syndrome Is Caused by VPS33B Mutations Affecting Rab Protein Interaction and Collagen Modification.</title>
        <authorList>
            <person name="Gruber R."/>
            <person name="Rogerson C."/>
            <person name="Windpassinger C."/>
            <person name="Banushi B."/>
            <person name="Straatman-Iwanowska A."/>
            <person name="Hanley J."/>
            <person name="Forneris F."/>
            <person name="Strohal R."/>
            <person name="Ulz P."/>
            <person name="Crumrine D."/>
            <person name="Menon G.K."/>
            <person name="Blunder S."/>
            <person name="Schmuth M."/>
            <person name="Mueller T."/>
            <person name="Smith H."/>
            <person name="Mills K."/>
            <person name="Kroisel P."/>
            <person name="Janecke A.R."/>
            <person name="Gissen P."/>
        </authorList>
    </citation>
    <scope>INTERACTION WITH VPS33B</scope>
</reference>
<reference key="44">
    <citation type="journal article" date="2017" name="PLoS ONE">
        <title>TBC1D12 is a novel Rab11-binding protein that modulates neurite outgrowth of PC12 cells.</title>
        <authorList>
            <person name="Oguchi M.E."/>
            <person name="Noguchi K."/>
            <person name="Fukuda M."/>
        </authorList>
    </citation>
    <scope>INTERACTION WITH TBC1D12</scope>
</reference>
<reference key="45">
    <citation type="journal article" date="2018" name="J. Cell Biol.">
        <title>The Rab11-binding protein RELCH/KIAA1468 controls intracellular cholesterol distribution.</title>
        <authorList>
            <person name="Sobajima T."/>
            <person name="Yoshimura S.I."/>
            <person name="Maeda T."/>
            <person name="Miyata H."/>
            <person name="Miyoshi E."/>
            <person name="Harada A."/>
        </authorList>
    </citation>
    <scope>SUBCELLULAR LOCATION</scope>
    <scope>FUNCTION</scope>
</reference>
<reference key="46">
    <citation type="journal article" date="2019" name="Dev. Cell">
        <title>Akt Regulates a Rab11-Effector Switch Required for Ciliogenesis.</title>
        <authorList>
            <person name="Walia V."/>
            <person name="Cuenca A."/>
            <person name="Vetter M."/>
            <person name="Insinna C."/>
            <person name="Perera S."/>
            <person name="Lu Q."/>
            <person name="Ritt D.A."/>
            <person name="Semler E."/>
            <person name="Specht S."/>
            <person name="Stauffer J."/>
            <person name="Morrison D.K."/>
            <person name="Lorentzen E."/>
            <person name="Westlake C.J."/>
        </authorList>
    </citation>
    <scope>FUNCTION</scope>
    <scope>INTERACTION WITH RAB3IP; RAB11FIP3 AND WDR44</scope>
</reference>
<reference key="47">
    <citation type="journal article" date="2019" name="Nat. Commun.">
        <title>Human DEF6 deficiency underlies an immunodeficiency syndrome with systemic autoimmunity and aberrant CTLA-4 homeostasis.</title>
        <authorList>
            <person name="Serwas N.K."/>
            <person name="Hoeger B."/>
            <person name="Ardy R.C."/>
            <person name="Stulz S.V."/>
            <person name="Sui Z."/>
            <person name="Memaran N."/>
            <person name="Meeths M."/>
            <person name="Krolo A."/>
            <person name="Yuece Petronczki O."/>
            <person name="Pfajfer L."/>
            <person name="Hou T.Z."/>
            <person name="Halliday N."/>
            <person name="Santos-Valente E."/>
            <person name="Kalinichenko A."/>
            <person name="Kennedy A."/>
            <person name="Mace E.M."/>
            <person name="Mukherjee M."/>
            <person name="Tesi B."/>
            <person name="Schrempf A."/>
            <person name="Pickl W.F."/>
            <person name="Loizou J.I."/>
            <person name="Kain R."/>
            <person name="Bidmon-Fliegenschnee B."/>
            <person name="Schickel J.N."/>
            <person name="Glauzy S."/>
            <person name="Huemer J."/>
            <person name="Garncarz W."/>
            <person name="Salzer E."/>
            <person name="Pierides I."/>
            <person name="Bilic I."/>
            <person name="Thiel J."/>
            <person name="Priftakis P."/>
            <person name="Banerjee P.P."/>
            <person name="Foerster-Waldl E."/>
            <person name="Medgyesi D."/>
            <person name="Huber W.D."/>
            <person name="Orange J.S."/>
            <person name="Meffre E."/>
            <person name="Sansom D.M."/>
            <person name="Bryceson Y.T."/>
            <person name="Altman A."/>
            <person name="Boztug K."/>
        </authorList>
    </citation>
    <scope>INTERACTION WITH DEF6</scope>
</reference>
<reference key="48">
    <citation type="journal article" date="2019" name="Nat. Commun.">
        <authorList>
            <person name="Serwas N.K."/>
            <person name="Hoeger B."/>
            <person name="Ardy R.C."/>
            <person name="Stulz S.V."/>
            <person name="Sui Z."/>
            <person name="Memaran N."/>
            <person name="Meeths M."/>
            <person name="Krolo A."/>
            <person name="Petronczki O.Y."/>
            <person name="Pfajfer L."/>
            <person name="Hou T.Z."/>
            <person name="Halliday N."/>
            <person name="Santos-Valente E."/>
            <person name="Kalinichenko A."/>
            <person name="Kennedy A."/>
            <person name="Mace E.M."/>
            <person name="Mukherjee M."/>
            <person name="Tesi B."/>
            <person name="Schrempf A."/>
            <person name="Pickl W.F."/>
            <person name="Loizou J.I."/>
            <person name="Kain R."/>
            <person name="Bidmon-Fliegenschnee B."/>
            <person name="Schickel J.N."/>
            <person name="Glauzy S."/>
            <person name="Huemer J."/>
            <person name="Garncarz W."/>
            <person name="Salzer E."/>
            <person name="Pierides I."/>
            <person name="Bilic I."/>
            <person name="Thiel J."/>
            <person name="Priftakis P."/>
            <person name="Banerjee P.P."/>
            <person name="Foerster-Waldl E."/>
            <person name="Medgyesi D."/>
            <person name="Huber W.D."/>
            <person name="Orange J.S."/>
            <person name="Meffre E."/>
            <person name="Sansom D.M."/>
            <person name="Bryceson Y.T."/>
            <person name="Altman A."/>
            <person name="Boztug K."/>
        </authorList>
    </citation>
    <scope>ERRATUM OF PUBMED:31308374</scope>
</reference>
<reference key="49">
    <citation type="journal article" date="2020" name="Front. Cell. Infect. Microbiol.">
        <title>The Salmonella effector SseK3 targets small Rab GTPases.</title>
        <authorList>
            <person name="Gan J."/>
            <person name="Scott N.E."/>
            <person name="Newson J.P.M."/>
            <person name="Wibawa R.R."/>
            <person name="Wong Fok Lung T."/>
            <person name="Pollock G.L."/>
            <person name="Ng G.Z."/>
            <person name="van Driel I."/>
            <person name="Pearson J.S."/>
            <person name="Hartland E.L."/>
            <person name="Giogha C."/>
        </authorList>
    </citation>
    <scope>GLYCOSYLATION AT ARG-4 (MICROBIAL INFECTION)</scope>
</reference>
<reference key="50">
    <citation type="journal article" date="2020" name="J. Cell Biol.">
        <title>GRAF2, WDR44, and MICAL1 mediate Rab8/10/11-dependent export of E-cadherin, MMP14, and CFTR DeltaF508.</title>
        <authorList>
            <person name="Lucken-Ardjomande Haesler S."/>
            <person name="Vallis Y."/>
            <person name="Pasche M."/>
            <person name="McMahon H.T."/>
        </authorList>
    </citation>
    <scope>FUNCTION</scope>
    <scope>INTERACTION WITH WDR44</scope>
    <scope>SUBCELLULAR LOCATION</scope>
    <scope>MUTAGENESIS OF SER-25</scope>
</reference>
<reference key="51">
    <citation type="journal article" date="2023" name="Mol. Psychiatry">
        <title>ATP9A deficiency causes ADHD and aberrant endosomal recycling via modulating RAB5 and RAB11 activity.</title>
        <authorList>
            <person name="Meng T."/>
            <person name="Chen X."/>
            <person name="He Z."/>
            <person name="Huang H."/>
            <person name="Lin S."/>
            <person name="Liu K."/>
            <person name="Bai G."/>
            <person name="Liu H."/>
            <person name="Xu M."/>
            <person name="Zhuang H."/>
            <person name="Zhang Y."/>
            <person name="Waqas A."/>
            <person name="Liu Q."/>
            <person name="Zhang C."/>
            <person name="Sun X.D."/>
            <person name="Huang H."/>
            <person name="Umair M."/>
            <person name="Yan Y."/>
            <person name="Feng D."/>
        </authorList>
    </citation>
    <scope>INTERACTION WITH ATP9A</scope>
    <scope>MUTAGENESIS OF SER-25</scope>
</reference>
<reference evidence="60" key="52">
    <citation type="journal article" date="2005" name="Nature">
        <title>Structural basis of family-wide Rab GTPase recognition by rabenosyn-5.</title>
        <authorList>
            <person name="Eathiraj S."/>
            <person name="Pan X."/>
            <person name="Ritacco C."/>
            <person name="Lambright D.G."/>
        </authorList>
    </citation>
    <scope>X-RAY CRYSTALLOGRAPHY (2.0 ANGSTROMS) OF 8-175 IN COMPLEX WITH MG(2+) AND GTP ANALOG</scope>
    <scope>COFACTOR</scope>
</reference>
<reference evidence="59" key="53">
    <citation type="journal article" date="2005" name="Structure">
        <title>Crystallographic evidence for substrate-assisted GTP hydrolysis by a small GTP binding protein.</title>
        <authorList>
            <person name="Pasqualato S."/>
            <person name="Cherfils J."/>
        </authorList>
    </citation>
    <scope>X-RAY CRYSTALLOGRAPHY (1.7 ANGSTROMS) OF 1-173 IN COMPLEX WITH MG(2+); GTP ANALOG AND GDP</scope>
    <scope>CATALYTIC ACTIVITY</scope>
    <scope>MUTAGENESIS OF GLN-70</scope>
    <scope>COFACTOR</scope>
</reference>
<reference evidence="64" key="54">
    <citation type="journal article" date="2006" name="J. Mol. Biol.">
        <title>Structural basis for Rab11-mediated recruitment of FIP3 to recycling endosomes.</title>
        <authorList>
            <person name="Eathiraj S."/>
            <person name="Mishra A."/>
            <person name="Prekeris R."/>
            <person name="Lambright D.G."/>
        </authorList>
    </citation>
    <scope>X-RAY CRYSTALLOGRAPHY (1.86 ANGSTROMS) OF 6-175 IN COMPLEX WITH MG(2+); GTP AND RAB11FIP3</scope>
    <scope>MUTAGENESIS OF GLN-70</scope>
    <scope>COFACTOR</scope>
    <scope>DOMAIN</scope>
</reference>
<reference evidence="61" key="55">
    <citation type="journal article" date="2006" name="Proc. Natl. Acad. Sci. U.S.A.">
        <title>Structural basis for Rab11-dependent membrane recruitment of a family of Rab11-interacting protein 3 (FIP3)/Arfophilin-1.</title>
        <authorList>
            <person name="Shiba T."/>
            <person name="Koga H."/>
            <person name="Shin H.-W."/>
            <person name="Kawasaki M."/>
            <person name="Kato R."/>
            <person name="Nakayama K."/>
            <person name="Wakatsuki S."/>
        </authorList>
    </citation>
    <scope>X-RAY CRYSTALLOGRAPHY (1.75 ANGSTROMS) OF 7-173 IN COMPLEX WITH MG(2+); GTP</scope>
    <scope>INTERACTION WITH RAB11FIP3 AND RAB11FIP4</scope>
    <scope>MUTAGENESIS OF GLN-70</scope>
    <scope>COFACTOR</scope>
</reference>
<reference evidence="62 63" key="56">
    <citation type="journal article" date="2006" name="Structure">
        <title>Crystal structure of rab11 in complex with rab11 family interacting protein 2.</title>
        <authorList>
            <person name="Jagoe W.N."/>
            <person name="Lindsay A.J."/>
            <person name="Read R.J."/>
            <person name="McCoy A.J."/>
            <person name="McCaffrey M.W."/>
            <person name="Khan A.R."/>
        </authorList>
    </citation>
    <scope>X-RAY CRYSTALLOGRAPHY (2.44 ANGSTROMS) OF 1-173 IN COMPLEX WITH MG(2+); GTP</scope>
    <scope>INTERACTION WITH RAB11FIP2</scope>
    <scope>MUTAGENESIS OF GLN-70</scope>
    <scope>COFACTOR</scope>
</reference>
<reference evidence="65 66 67" key="57">
    <citation type="journal article" date="2015" name="Nat. Struct. Mol. Biol.">
        <title>Structure of Rab11-FIP3-Rabin8 reveals simultaneous binding of FIP3 and Rabin8 effectors to Rab11.</title>
        <authorList>
            <person name="Vetter M."/>
            <person name="Stehle R."/>
            <person name="Basquin C."/>
            <person name="Lorentzen E."/>
        </authorList>
    </citation>
    <scope>X-RAY CRYSTALLOGRAPHY (2.60 ANGSTROMS) OF 6-186</scope>
    <scope>IN COMPLEX WITH RAB11FIP3 AND RAB3IP</scope>
</reference>
<reference evidence="68" key="58">
    <citation type="journal article" date="2018" name="Nat. Commun.">
        <title>Structural determinants of Rab11 activation by the guanine nucleotide exchange factor SH3BP5.</title>
        <authorList>
            <person name="Jenkins M.L."/>
            <person name="Margaria J.P."/>
            <person name="Stariha J.T.B."/>
            <person name="Hoffmann R.M."/>
            <person name="McPhail J.A."/>
            <person name="Hamelin D.J."/>
            <person name="Boulanger M.J."/>
            <person name="Hirsch E."/>
            <person name="Burke J.E."/>
        </authorList>
    </citation>
    <scope>X-RAY CRYSTALLOGRAPHY (3.10 ANGSTROMS) IN COMPLEX WITH SH3BP5</scope>
    <scope>SUBCELLULAR LOCATION</scope>
    <scope>MUTAGENESIS OF LYS-13; VAL-22; LYS-24; SER-25; PHE-36; LEU-38; SER-40; LYS-41; ILE-44; GLN-70; ARG-82 AND SER-154</scope>
</reference>
<feature type="initiator methionine" description="Removed" evidence="52">
    <location>
        <position position="1"/>
    </location>
</feature>
<feature type="chain" id="PRO_0000121151" description="Ras-related protein Rab-11A">
    <location>
        <begin position="2"/>
        <end position="213"/>
    </location>
</feature>
<feature type="propeptide" id="PRO_0000370807" description="Removed in mature form" evidence="6">
    <location>
        <begin position="214"/>
        <end position="216"/>
    </location>
</feature>
<feature type="region of interest" description="Disordered" evidence="7">
    <location>
        <begin position="183"/>
        <end position="211"/>
    </location>
</feature>
<feature type="short sequence motif" description="Switch 1" evidence="23 64">
    <location>
        <begin position="36"/>
        <end position="47"/>
    </location>
</feature>
<feature type="short sequence motif" description="Switch 2" evidence="23 64">
    <location>
        <begin position="67"/>
        <end position="86"/>
    </location>
</feature>
<feature type="binding site" evidence="22 24 61 62 63">
    <location>
        <position position="20"/>
    </location>
    <ligand>
        <name>GTP</name>
        <dbReference type="ChEBI" id="CHEBI:37565"/>
    </ligand>
</feature>
<feature type="binding site" evidence="22 23 24 61 62 63 64">
    <location>
        <position position="21"/>
    </location>
    <ligand>
        <name>GTP</name>
        <dbReference type="ChEBI" id="CHEBI:37565"/>
    </ligand>
</feature>
<feature type="binding site" evidence="22 63">
    <location>
        <position position="22"/>
    </location>
    <ligand>
        <name>GTP</name>
        <dbReference type="ChEBI" id="CHEBI:37565"/>
    </ligand>
</feature>
<feature type="binding site" evidence="22 23 24 61 62 63 64">
    <location>
        <position position="23"/>
    </location>
    <ligand>
        <name>GTP</name>
        <dbReference type="ChEBI" id="CHEBI:37565"/>
    </ligand>
</feature>
<feature type="binding site" evidence="22 23 24 61 62 63 64">
    <location>
        <position position="24"/>
    </location>
    <ligand>
        <name>GTP</name>
        <dbReference type="ChEBI" id="CHEBI:37565"/>
    </ligand>
</feature>
<feature type="binding site" evidence="22 23 24 61 62 63 64">
    <location>
        <position position="25"/>
    </location>
    <ligand>
        <name>GTP</name>
        <dbReference type="ChEBI" id="CHEBI:37565"/>
    </ligand>
</feature>
<feature type="binding site" evidence="19 20 22 23 24 59 60 61 62 63 64">
    <location>
        <position position="25"/>
    </location>
    <ligand>
        <name>Mg(2+)</name>
        <dbReference type="ChEBI" id="CHEBI:18420"/>
    </ligand>
</feature>
<feature type="binding site" evidence="22 23 24 61 62 63 64">
    <location>
        <position position="26"/>
    </location>
    <ligand>
        <name>GTP</name>
        <dbReference type="ChEBI" id="CHEBI:37565"/>
    </ligand>
</feature>
<feature type="binding site" evidence="22 23 24 61 62 63 64">
    <location>
        <position position="37"/>
    </location>
    <ligand>
        <name>GTP</name>
        <dbReference type="ChEBI" id="CHEBI:37565"/>
    </ligand>
</feature>
<feature type="binding site" evidence="22 23 24 61 62 63 64">
    <location>
        <position position="38"/>
    </location>
    <ligand>
        <name>GTP</name>
        <dbReference type="ChEBI" id="CHEBI:37565"/>
    </ligand>
</feature>
<feature type="binding site" evidence="22 23 24 61 62 63 64">
    <location>
        <position position="40"/>
    </location>
    <ligand>
        <name>GTP</name>
        <dbReference type="ChEBI" id="CHEBI:37565"/>
    </ligand>
</feature>
<feature type="binding site" evidence="22 23 24 62 63">
    <location>
        <position position="42"/>
    </location>
    <ligand>
        <name>GTP</name>
        <dbReference type="ChEBI" id="CHEBI:37565"/>
    </ligand>
</feature>
<feature type="binding site" evidence="22 23 24 61 62 63 64">
    <location>
        <position position="43"/>
    </location>
    <ligand>
        <name>GTP</name>
        <dbReference type="ChEBI" id="CHEBI:37565"/>
    </ligand>
</feature>
<feature type="binding site" evidence="19 20 22 23 24 59 60 61 62 63 64">
    <location>
        <position position="43"/>
    </location>
    <ligand>
        <name>Mg(2+)</name>
        <dbReference type="ChEBI" id="CHEBI:18420"/>
    </ligand>
</feature>
<feature type="binding site" evidence="22 24 61 62">
    <location>
        <position position="66"/>
    </location>
    <ligand>
        <name>Mg(2+)</name>
        <dbReference type="ChEBI" id="CHEBI:18420"/>
    </ligand>
</feature>
<feature type="binding site" evidence="22 23 24 61 62 63 64">
    <location>
        <position position="69"/>
    </location>
    <ligand>
        <name>GTP</name>
        <dbReference type="ChEBI" id="CHEBI:37565"/>
    </ligand>
</feature>
<feature type="binding site" evidence="22 23 24 61 62 63">
    <location>
        <position position="124"/>
    </location>
    <ligand>
        <name>GTP</name>
        <dbReference type="ChEBI" id="CHEBI:37565"/>
    </ligand>
</feature>
<feature type="binding site" evidence="22 23 24 61 62 63 64">
    <location>
        <position position="125"/>
    </location>
    <ligand>
        <name>GTP</name>
        <dbReference type="ChEBI" id="CHEBI:37565"/>
    </ligand>
</feature>
<feature type="binding site" evidence="22 23 24 61 62 63 64">
    <location>
        <position position="127"/>
    </location>
    <ligand>
        <name>GTP</name>
        <dbReference type="ChEBI" id="CHEBI:37565"/>
    </ligand>
</feature>
<feature type="binding site" evidence="22 23 24 61 62 63 64">
    <location>
        <position position="155"/>
    </location>
    <ligand>
        <name>GTP</name>
        <dbReference type="ChEBI" id="CHEBI:37565"/>
    </ligand>
</feature>
<feature type="binding site" evidence="22 23 24 61 62 63 64">
    <location>
        <position position="156"/>
    </location>
    <ligand>
        <name>GTP</name>
        <dbReference type="ChEBI" id="CHEBI:37565"/>
    </ligand>
</feature>
<feature type="modified residue" description="N-acetylglycine" evidence="52">
    <location>
        <position position="2"/>
    </location>
</feature>
<feature type="modified residue" description="Cysteine methyl ester" evidence="6">
    <location>
        <position position="213"/>
    </location>
</feature>
<feature type="lipid moiety-binding region" description="S-geranylgeranyl cysteine" evidence="38">
    <location>
        <position position="212"/>
    </location>
</feature>
<feature type="lipid moiety-binding region" description="S-geranylgeranyl cysteine" evidence="38">
    <location>
        <position position="213"/>
    </location>
</feature>
<feature type="glycosylation site" description="(Microbial infection) N-beta-linked (GlcNAc) arginine" evidence="50">
    <location>
        <position position="4"/>
    </location>
</feature>
<feature type="splice variant" id="VSP_046755" description="In isoform 2." evidence="54">
    <original>GLSFIETSALDSTNVEAAFQTILTEIYRIVSQKQMSDRRENDMSPSNNVVPIHVPPTTENKPKVQCCQNI</original>
    <variation>EANVRQTRK</variation>
    <location>
        <begin position="147"/>
        <end position="216"/>
    </location>
</feature>
<feature type="mutagenesis site" description="Abolishes SH3BP5-mediated guanine nucleotide exchange." evidence="46">
    <original>K</original>
    <variation>N</variation>
    <location>
        <position position="13"/>
    </location>
</feature>
<feature type="mutagenesis site" description="Impairs protein folding." evidence="46">
    <original>V</original>
    <variation>M</variation>
    <location>
        <position position="22"/>
    </location>
</feature>
<feature type="mutagenesis site" description="Impairs protein folding and decreases affinity for guanine nucleotides." evidence="46">
    <original>K</original>
    <variation>R</variation>
    <location>
        <position position="24"/>
    </location>
</feature>
<feature type="mutagenesis site" description="Dominant-negative mutant (GDP-bound form). Induces increased number of binucleated cells, indicating defects in cytokinesis. Inhibits the transport of NPC1L1 to the plama membrane. Disrupts the trafficking of CDH1 to the plasma membrane and promotes accumulation of CDH1 in RAB11A endosomes in nonpolarized cells. Promotes mistargeting of CDH1 to the apical membrane in polarized cells. Increased interaction with ATP9A. Loss of interaction with WDR44, decreased WDR44-positive tubules and loss of E-cadherin export." evidence="17 18 29 46 49 51">
    <original>S</original>
    <variation>N</variation>
    <location>
        <position position="25"/>
    </location>
</feature>
<feature type="mutagenesis site" description="Nearly abolishes SH3BP5-mediated guanine nucleotide exchange." evidence="46">
    <original>F</original>
    <variation>A</variation>
    <location>
        <position position="36"/>
    </location>
</feature>
<feature type="mutagenesis site" description="Decreases SH3BP5-mediated guanine nucleotide exchange." evidence="46">
    <original>L</original>
    <variation>A</variation>
    <location>
        <position position="38"/>
    </location>
</feature>
<feature type="mutagenesis site" description="Nearly abolishes SH3BP5-mediated guanine nucleotide exchange." evidence="46">
    <original>L</original>
    <variation>P</variation>
    <location>
        <position position="38"/>
    </location>
</feature>
<feature type="mutagenesis site" description="Nearly abolishes SH3BP5-mediated guanine nucleotide exchange." evidence="46">
    <original>S</original>
    <variation>F</variation>
    <location>
        <position position="40"/>
    </location>
</feature>
<feature type="mutagenesis site" description="Mildly decreases SH3BP5-mediated guanine nucleotide exchange." evidence="46">
    <original>K</original>
    <variation>A</variation>
    <location>
        <position position="41"/>
    </location>
</feature>
<feature type="mutagenesis site" description="Abolishes SH3BP5-mediated guanine nucleotide exchange." evidence="46">
    <original>K</original>
    <variation>P</variation>
    <location>
        <position position="41"/>
    </location>
</feature>
<feature type="mutagenesis site" description="Abolishes SH3BP5-mediated guanine nucleotide exchange." evidence="46">
    <original>I</original>
    <variation>A</variation>
    <location>
        <position position="44"/>
    </location>
</feature>
<feature type="mutagenesis site" description="Constitutively active mutant (GTP-bound form). Decreases GTPase activity. Disrupts the trafficking of CDH1 to the plasma membrane and promotes accumulation of CDH1 in RAB11A endosomes in nonpolarized cells. Promotes mistargeting of CDH1 to the apical membrane in polarized cells." evidence="18 19 22 23 24 46">
    <original>Q</original>
    <variation>L</variation>
    <location>
        <position position="70"/>
    </location>
</feature>
<feature type="mutagenesis site" description="Decreases SH3BP5-mediated guanine nucleotide exchange." evidence="46">
    <original>R</original>
    <variation>C</variation>
    <location>
        <position position="82"/>
    </location>
</feature>
<feature type="mutagenesis site" description="Impairs protein folding." evidence="46">
    <original>S</original>
    <variation>L</variation>
    <location>
        <position position="154"/>
    </location>
</feature>
<feature type="strand" evidence="69">
    <location>
        <begin position="9"/>
        <end position="18"/>
    </location>
</feature>
<feature type="helix" evidence="70">
    <location>
        <begin position="20"/>
        <end position="22"/>
    </location>
</feature>
<feature type="helix" evidence="69">
    <location>
        <begin position="24"/>
        <end position="33"/>
    </location>
</feature>
<feature type="strand" evidence="70">
    <location>
        <begin position="34"/>
        <end position="38"/>
    </location>
</feature>
<feature type="turn" evidence="70">
    <location>
        <begin position="41"/>
        <end position="44"/>
    </location>
</feature>
<feature type="strand" evidence="69">
    <location>
        <begin position="45"/>
        <end position="55"/>
    </location>
</feature>
<feature type="strand" evidence="69">
    <location>
        <begin position="58"/>
        <end position="67"/>
    </location>
</feature>
<feature type="strand" evidence="69">
    <location>
        <begin position="72"/>
        <end position="74"/>
    </location>
</feature>
<feature type="helix" evidence="69">
    <location>
        <begin position="78"/>
        <end position="81"/>
    </location>
</feature>
<feature type="strand" evidence="69">
    <location>
        <begin position="86"/>
        <end position="92"/>
    </location>
</feature>
<feature type="helix" evidence="69">
    <location>
        <begin position="96"/>
        <end position="100"/>
    </location>
</feature>
<feature type="helix" evidence="69">
    <location>
        <begin position="102"/>
        <end position="112"/>
    </location>
</feature>
<feature type="strand" evidence="69">
    <location>
        <begin position="118"/>
        <end position="124"/>
    </location>
</feature>
<feature type="helix" evidence="69">
    <location>
        <begin position="126"/>
        <end position="131"/>
    </location>
</feature>
<feature type="helix" evidence="69">
    <location>
        <begin position="136"/>
        <end position="145"/>
    </location>
</feature>
<feature type="strand" evidence="69">
    <location>
        <begin position="149"/>
        <end position="152"/>
    </location>
</feature>
<feature type="turn" evidence="69">
    <location>
        <begin position="155"/>
        <end position="157"/>
    </location>
</feature>
<feature type="helix" evidence="69">
    <location>
        <begin position="161"/>
        <end position="172"/>
    </location>
</feature>
<keyword id="KW-0002">3D-structure</keyword>
<keyword id="KW-0007">Acetylation</keyword>
<keyword id="KW-0025">Alternative splicing</keyword>
<keyword id="KW-0131">Cell cycle</keyword>
<keyword id="KW-1003">Cell membrane</keyword>
<keyword id="KW-0968">Cytoplasmic vesicle</keyword>
<keyword id="KW-0903">Direct protein sequencing</keyword>
<keyword id="KW-0967">Endosome</keyword>
<keyword id="KW-0325">Glycoprotein</keyword>
<keyword id="KW-0333">Golgi apparatus</keyword>
<keyword id="KW-0342">GTP-binding</keyword>
<keyword id="KW-0378">Hydrolase</keyword>
<keyword id="KW-0449">Lipoprotein</keyword>
<keyword id="KW-0472">Membrane</keyword>
<keyword id="KW-0488">Methylation</keyword>
<keyword id="KW-0547">Nucleotide-binding</keyword>
<keyword id="KW-0636">Prenylation</keyword>
<keyword id="KW-0653">Protein transport</keyword>
<keyword id="KW-1267">Proteomics identification</keyword>
<keyword id="KW-1185">Reference proteome</keyword>
<keyword id="KW-0813">Transport</keyword>
<name>RB11A_HUMAN</name>
<evidence type="ECO:0000250" key="1"/>
<evidence type="ECO:0000250" key="2">
    <source>
        <dbReference type="UniProtKB" id="P62490"/>
    </source>
</evidence>
<evidence type="ECO:0000250" key="3">
    <source>
        <dbReference type="UniProtKB" id="P62492"/>
    </source>
</evidence>
<evidence type="ECO:0000250" key="4">
    <source>
        <dbReference type="UniProtKB" id="P62493"/>
    </source>
</evidence>
<evidence type="ECO:0000250" key="5">
    <source>
        <dbReference type="UniProtKB" id="P62494"/>
    </source>
</evidence>
<evidence type="ECO:0000255" key="6"/>
<evidence type="ECO:0000256" key="7">
    <source>
        <dbReference type="SAM" id="MobiDB-lite"/>
    </source>
</evidence>
<evidence type="ECO:0000269" key="8">
    <source>
    </source>
</evidence>
<evidence type="ECO:0000269" key="9">
    <source>
    </source>
</evidence>
<evidence type="ECO:0000269" key="10">
    <source>
    </source>
</evidence>
<evidence type="ECO:0000269" key="11">
    <source>
    </source>
</evidence>
<evidence type="ECO:0000269" key="12">
    <source>
    </source>
</evidence>
<evidence type="ECO:0000269" key="13">
    <source>
    </source>
</evidence>
<evidence type="ECO:0000269" key="14">
    <source>
    </source>
</evidence>
<evidence type="ECO:0000269" key="15">
    <source>
    </source>
</evidence>
<evidence type="ECO:0000269" key="16">
    <source>
    </source>
</evidence>
<evidence type="ECO:0000269" key="17">
    <source>
    </source>
</evidence>
<evidence type="ECO:0000269" key="18">
    <source>
    </source>
</evidence>
<evidence type="ECO:0000269" key="19">
    <source>
    </source>
</evidence>
<evidence type="ECO:0000269" key="20">
    <source>
    </source>
</evidence>
<evidence type="ECO:0000269" key="21">
    <source>
    </source>
</evidence>
<evidence type="ECO:0000269" key="22">
    <source>
    </source>
</evidence>
<evidence type="ECO:0000269" key="23">
    <source>
    </source>
</evidence>
<evidence type="ECO:0000269" key="24">
    <source>
    </source>
</evidence>
<evidence type="ECO:0000269" key="25">
    <source>
    </source>
</evidence>
<evidence type="ECO:0000269" key="26">
    <source>
    </source>
</evidence>
<evidence type="ECO:0000269" key="27">
    <source>
    </source>
</evidence>
<evidence type="ECO:0000269" key="28">
    <source>
    </source>
</evidence>
<evidence type="ECO:0000269" key="29">
    <source>
    </source>
</evidence>
<evidence type="ECO:0000269" key="30">
    <source>
    </source>
</evidence>
<evidence type="ECO:0000269" key="31">
    <source>
    </source>
</evidence>
<evidence type="ECO:0000269" key="32">
    <source>
    </source>
</evidence>
<evidence type="ECO:0000269" key="33">
    <source>
    </source>
</evidence>
<evidence type="ECO:0000269" key="34">
    <source>
    </source>
</evidence>
<evidence type="ECO:0000269" key="35">
    <source>
    </source>
</evidence>
<evidence type="ECO:0000269" key="36">
    <source>
    </source>
</evidence>
<evidence type="ECO:0000269" key="37">
    <source>
    </source>
</evidence>
<evidence type="ECO:0000269" key="38">
    <source>
    </source>
</evidence>
<evidence type="ECO:0000269" key="39">
    <source>
    </source>
</evidence>
<evidence type="ECO:0000269" key="40">
    <source>
    </source>
</evidence>
<evidence type="ECO:0000269" key="41">
    <source>
    </source>
</evidence>
<evidence type="ECO:0000269" key="42">
    <source>
    </source>
</evidence>
<evidence type="ECO:0000269" key="43">
    <source>
    </source>
</evidence>
<evidence type="ECO:0000269" key="44">
    <source>
    </source>
</evidence>
<evidence type="ECO:0000269" key="45">
    <source>
    </source>
</evidence>
<evidence type="ECO:0000269" key="46">
    <source>
    </source>
</evidence>
<evidence type="ECO:0000269" key="47">
    <source>
    </source>
</evidence>
<evidence type="ECO:0000269" key="48">
    <source>
    </source>
</evidence>
<evidence type="ECO:0000269" key="49">
    <source>
    </source>
</evidence>
<evidence type="ECO:0000269" key="50">
    <source>
    </source>
</evidence>
<evidence type="ECO:0000269" key="51">
    <source>
    </source>
</evidence>
<evidence type="ECO:0000269" key="52">
    <source ref="11"/>
</evidence>
<evidence type="ECO:0000303" key="53">
    <source>
    </source>
</evidence>
<evidence type="ECO:0000303" key="54">
    <source>
    </source>
</evidence>
<evidence type="ECO:0000303" key="55">
    <source>
    </source>
</evidence>
<evidence type="ECO:0000305" key="56"/>
<evidence type="ECO:0000305" key="57">
    <source>
    </source>
</evidence>
<evidence type="ECO:0000312" key="58">
    <source>
        <dbReference type="HGNC" id="HGNC:9760"/>
    </source>
</evidence>
<evidence type="ECO:0007744" key="59">
    <source>
        <dbReference type="PDB" id="1OIX"/>
    </source>
</evidence>
<evidence type="ECO:0007744" key="60">
    <source>
        <dbReference type="PDB" id="1YZK"/>
    </source>
</evidence>
<evidence type="ECO:0007744" key="61">
    <source>
        <dbReference type="PDB" id="2D7C"/>
    </source>
</evidence>
<evidence type="ECO:0007744" key="62">
    <source>
        <dbReference type="PDB" id="2GZD"/>
    </source>
</evidence>
<evidence type="ECO:0007744" key="63">
    <source>
        <dbReference type="PDB" id="2GZH"/>
    </source>
</evidence>
<evidence type="ECO:0007744" key="64">
    <source>
        <dbReference type="PDB" id="2HV8"/>
    </source>
</evidence>
<evidence type="ECO:0007744" key="65">
    <source>
        <dbReference type="PDB" id="4UJ3"/>
    </source>
</evidence>
<evidence type="ECO:0007744" key="66">
    <source>
        <dbReference type="PDB" id="4UJ4"/>
    </source>
</evidence>
<evidence type="ECO:0007744" key="67">
    <source>
        <dbReference type="PDB" id="4UJ5"/>
    </source>
</evidence>
<evidence type="ECO:0007744" key="68">
    <source>
        <dbReference type="PDB" id="6DJL"/>
    </source>
</evidence>
<evidence type="ECO:0007829" key="69">
    <source>
        <dbReference type="PDB" id="1OIX"/>
    </source>
</evidence>
<evidence type="ECO:0007829" key="70">
    <source>
        <dbReference type="PDB" id="6DJL"/>
    </source>
</evidence>
<gene>
    <name evidence="58" type="primary">RAB11A</name>
    <name evidence="53" type="synonym">RAB11</name>
</gene>
<dbReference type="EC" id="3.6.5.2" evidence="4"/>
<dbReference type="EMBL" id="X53143">
    <property type="protein sequence ID" value="CAA37300.1"/>
    <property type="molecule type" value="mRNA"/>
</dbReference>
<dbReference type="EMBL" id="X56740">
    <property type="protein sequence ID" value="CAA40064.1"/>
    <property type="molecule type" value="mRNA"/>
</dbReference>
<dbReference type="EMBL" id="AF000231">
    <property type="protein sequence ID" value="AAC32887.1"/>
    <property type="molecule type" value="mRNA"/>
</dbReference>
<dbReference type="EMBL" id="AF498946">
    <property type="protein sequence ID" value="AAM21094.1"/>
    <property type="molecule type" value="mRNA"/>
</dbReference>
<dbReference type="EMBL" id="CR407669">
    <property type="protein sequence ID" value="CAG28597.1"/>
    <property type="molecule type" value="mRNA"/>
</dbReference>
<dbReference type="EMBL" id="CR536493">
    <property type="protein sequence ID" value="CAG38732.1"/>
    <property type="molecule type" value="mRNA"/>
</dbReference>
<dbReference type="EMBL" id="BT020151">
    <property type="protein sequence ID" value="AAV38953.1"/>
    <property type="molecule type" value="mRNA"/>
</dbReference>
<dbReference type="EMBL" id="BT020154">
    <property type="protein sequence ID" value="AAV38956.1"/>
    <property type="molecule type" value="mRNA"/>
</dbReference>
<dbReference type="EMBL" id="AK300008">
    <property type="protein sequence ID" value="BAG61825.1"/>
    <property type="molecule type" value="mRNA"/>
</dbReference>
<dbReference type="EMBL" id="AK311770">
    <property type="protein sequence ID" value="BAG34713.1"/>
    <property type="molecule type" value="mRNA"/>
</dbReference>
<dbReference type="EMBL" id="AC011939">
    <property type="status" value="NOT_ANNOTATED_CDS"/>
    <property type="molecule type" value="Genomic_DNA"/>
</dbReference>
<dbReference type="EMBL" id="AC084854">
    <property type="status" value="NOT_ANNOTATED_CDS"/>
    <property type="molecule type" value="Genomic_DNA"/>
</dbReference>
<dbReference type="EMBL" id="CH471082">
    <property type="protein sequence ID" value="EAW77752.1"/>
    <property type="molecule type" value="Genomic_DNA"/>
</dbReference>
<dbReference type="EMBL" id="BC013348">
    <property type="protein sequence ID" value="AAH13348.1"/>
    <property type="molecule type" value="mRNA"/>
</dbReference>
<dbReference type="CCDS" id="CCDS10212.1">
    <molecule id="P62491-1"/>
</dbReference>
<dbReference type="CCDS" id="CCDS58373.1">
    <molecule id="P62491-2"/>
</dbReference>
<dbReference type="PIR" id="S47169">
    <property type="entry name" value="S47169"/>
</dbReference>
<dbReference type="RefSeq" id="NP_001193765.1">
    <molecule id="P62491-2"/>
    <property type="nucleotide sequence ID" value="NM_001206836.2"/>
</dbReference>
<dbReference type="RefSeq" id="NP_004654.1">
    <molecule id="P62491-1"/>
    <property type="nucleotide sequence ID" value="NM_004663.5"/>
</dbReference>
<dbReference type="PDB" id="1OIV">
    <property type="method" value="X-ray"/>
    <property type="resolution" value="1.98 A"/>
    <property type="chains" value="A/B=1-173"/>
</dbReference>
<dbReference type="PDB" id="1OIW">
    <property type="method" value="X-ray"/>
    <property type="resolution" value="2.05 A"/>
    <property type="chains" value="A=1-173"/>
</dbReference>
<dbReference type="PDB" id="1OIX">
    <property type="method" value="X-ray"/>
    <property type="resolution" value="1.70 A"/>
    <property type="chains" value="A=1-173"/>
</dbReference>
<dbReference type="PDB" id="1YZK">
    <property type="method" value="X-ray"/>
    <property type="resolution" value="2.00 A"/>
    <property type="chains" value="A=8-175"/>
</dbReference>
<dbReference type="PDB" id="2D7C">
    <property type="method" value="X-ray"/>
    <property type="resolution" value="1.75 A"/>
    <property type="chains" value="A/B=7-173"/>
</dbReference>
<dbReference type="PDB" id="2GZD">
    <property type="method" value="X-ray"/>
    <property type="resolution" value="2.44 A"/>
    <property type="chains" value="A/B=2-173"/>
</dbReference>
<dbReference type="PDB" id="2GZH">
    <property type="method" value="X-ray"/>
    <property type="resolution" value="2.47 A"/>
    <property type="chains" value="A=2-173"/>
</dbReference>
<dbReference type="PDB" id="2HV8">
    <property type="method" value="X-ray"/>
    <property type="resolution" value="1.86 A"/>
    <property type="chains" value="A/B/C=6-175"/>
</dbReference>
<dbReference type="PDB" id="4C4P">
    <property type="method" value="X-ray"/>
    <property type="resolution" value="2.00 A"/>
    <property type="chains" value="A=1-173"/>
</dbReference>
<dbReference type="PDB" id="4D0L">
    <property type="method" value="X-ray"/>
    <property type="resolution" value="2.94 A"/>
    <property type="chains" value="B/D/F=1-216"/>
</dbReference>
<dbReference type="PDB" id="4D0M">
    <property type="method" value="X-ray"/>
    <property type="resolution" value="6.00 A"/>
    <property type="chains" value="B/D/H/J/N/P/R/T/X/Z/d/h=1-216"/>
</dbReference>
<dbReference type="PDB" id="4LWZ">
    <property type="method" value="X-ray"/>
    <property type="resolution" value="2.55 A"/>
    <property type="chains" value="A/C=1-177"/>
</dbReference>
<dbReference type="PDB" id="4LX0">
    <property type="method" value="X-ray"/>
    <property type="resolution" value="2.19 A"/>
    <property type="chains" value="A/C=1-177"/>
</dbReference>
<dbReference type="PDB" id="4UJ3">
    <property type="method" value="X-ray"/>
    <property type="resolution" value="3.00 A"/>
    <property type="chains" value="A/D/G/J/M/P/S/V=4-186"/>
</dbReference>
<dbReference type="PDB" id="4UJ4">
    <property type="method" value="X-ray"/>
    <property type="resolution" value="4.20 A"/>
    <property type="chains" value="A/D/G/J=4-186"/>
</dbReference>
<dbReference type="PDB" id="4UJ5">
    <property type="method" value="X-ray"/>
    <property type="resolution" value="2.60 A"/>
    <property type="chains" value="A/B=6-186"/>
</dbReference>
<dbReference type="PDB" id="5C46">
    <property type="method" value="X-ray"/>
    <property type="resolution" value="2.65 A"/>
    <property type="chains" value="F=1-216"/>
</dbReference>
<dbReference type="PDB" id="5C4G">
    <property type="method" value="X-ray"/>
    <property type="resolution" value="3.20 A"/>
    <property type="chains" value="B=1-216"/>
</dbReference>
<dbReference type="PDB" id="5EUQ">
    <property type="method" value="X-ray"/>
    <property type="resolution" value="3.20 A"/>
    <property type="chains" value="B=1-216"/>
</dbReference>
<dbReference type="PDB" id="5EZ5">
    <property type="method" value="X-ray"/>
    <property type="resolution" value="2.40 A"/>
    <property type="chains" value="A/B=8-175"/>
</dbReference>
<dbReference type="PDB" id="5FBL">
    <property type="method" value="X-ray"/>
    <property type="resolution" value="3.37 A"/>
    <property type="chains" value="B=1-216"/>
</dbReference>
<dbReference type="PDB" id="5FBQ">
    <property type="method" value="X-ray"/>
    <property type="resolution" value="3.79 A"/>
    <property type="chains" value="B=1-216"/>
</dbReference>
<dbReference type="PDB" id="5FBR">
    <property type="method" value="X-ray"/>
    <property type="resolution" value="3.28 A"/>
    <property type="chains" value="B=1-216"/>
</dbReference>
<dbReference type="PDB" id="5FBV">
    <property type="method" value="X-ray"/>
    <property type="resolution" value="3.29 A"/>
    <property type="chains" value="B=1-216"/>
</dbReference>
<dbReference type="PDB" id="5FBW">
    <property type="method" value="X-ray"/>
    <property type="resolution" value="3.49 A"/>
    <property type="chains" value="B=1-216"/>
</dbReference>
<dbReference type="PDB" id="5JCZ">
    <property type="method" value="X-ray"/>
    <property type="resolution" value="2.06 A"/>
    <property type="chains" value="A/D/I=1-177"/>
</dbReference>
<dbReference type="PDB" id="6DJL">
    <property type="method" value="X-ray"/>
    <property type="resolution" value="3.10 A"/>
    <property type="chains" value="A/F/G/H=1-216"/>
</dbReference>
<dbReference type="PDB" id="6IXV">
    <property type="method" value="X-ray"/>
    <property type="resolution" value="3.80 A"/>
    <property type="chains" value="E/F/G/H=1-173"/>
</dbReference>
<dbReference type="PDB" id="8VOF">
    <property type="method" value="X-ray"/>
    <property type="resolution" value="3.00 A"/>
    <property type="chains" value="B=1-216"/>
</dbReference>
<dbReference type="PDBsum" id="1OIV"/>
<dbReference type="PDBsum" id="1OIW"/>
<dbReference type="PDBsum" id="1OIX"/>
<dbReference type="PDBsum" id="1YZK"/>
<dbReference type="PDBsum" id="2D7C"/>
<dbReference type="PDBsum" id="2GZD"/>
<dbReference type="PDBsum" id="2GZH"/>
<dbReference type="PDBsum" id="2HV8"/>
<dbReference type="PDBsum" id="4C4P"/>
<dbReference type="PDBsum" id="4D0L"/>
<dbReference type="PDBsum" id="4D0M"/>
<dbReference type="PDBsum" id="4LWZ"/>
<dbReference type="PDBsum" id="4LX0"/>
<dbReference type="PDBsum" id="4UJ3"/>
<dbReference type="PDBsum" id="4UJ4"/>
<dbReference type="PDBsum" id="4UJ5"/>
<dbReference type="PDBsum" id="5C46"/>
<dbReference type="PDBsum" id="5C4G"/>
<dbReference type="PDBsum" id="5EUQ"/>
<dbReference type="PDBsum" id="5EZ5"/>
<dbReference type="PDBsum" id="5FBL"/>
<dbReference type="PDBsum" id="5FBQ"/>
<dbReference type="PDBsum" id="5FBR"/>
<dbReference type="PDBsum" id="5FBV"/>
<dbReference type="PDBsum" id="5FBW"/>
<dbReference type="PDBsum" id="5JCZ"/>
<dbReference type="PDBsum" id="6DJL"/>
<dbReference type="PDBsum" id="6IXV"/>
<dbReference type="PDBsum" id="8VOF"/>
<dbReference type="SMR" id="P62491"/>
<dbReference type="BioGRID" id="114299">
    <property type="interactions" value="844"/>
</dbReference>
<dbReference type="CORUM" id="P62491"/>
<dbReference type="DIP" id="DIP-29138N"/>
<dbReference type="FunCoup" id="P62491">
    <property type="interactions" value="3175"/>
</dbReference>
<dbReference type="IntAct" id="P62491">
    <property type="interactions" value="232"/>
</dbReference>
<dbReference type="MINT" id="P62491"/>
<dbReference type="STRING" id="9606.ENSP00000261890"/>
<dbReference type="ChEMBL" id="CHEMBL5291509"/>
<dbReference type="DrugBank" id="DB01864">
    <property type="generic name" value="5'-Guanosine-Diphosphate-Monothiophosphate"/>
</dbReference>
<dbReference type="DrugBank" id="DB04315">
    <property type="generic name" value="Guanosine-5'-Diphosphate"/>
</dbReference>
<dbReference type="GlyCosmos" id="P62491">
    <property type="glycosylation" value="1 site, No reported glycans"/>
</dbReference>
<dbReference type="GlyGen" id="P62491">
    <property type="glycosylation" value="1 site, 1 O-linked glycan (1 site)"/>
</dbReference>
<dbReference type="iPTMnet" id="P62491"/>
<dbReference type="PhosphoSitePlus" id="P62491"/>
<dbReference type="SwissPalm" id="P62491"/>
<dbReference type="BioMuta" id="RAB11A"/>
<dbReference type="DMDM" id="50402542"/>
<dbReference type="OGP" id="P62491"/>
<dbReference type="jPOST" id="P62491"/>
<dbReference type="MassIVE" id="P62491"/>
<dbReference type="PaxDb" id="9606-ENSP00000261890"/>
<dbReference type="PeptideAtlas" id="P62491"/>
<dbReference type="ProteomicsDB" id="5063"/>
<dbReference type="ProteomicsDB" id="57402">
    <molecule id="P62491-1"/>
</dbReference>
<dbReference type="Pumba" id="P62491"/>
<dbReference type="TopDownProteomics" id="P62491-1">
    <molecule id="P62491-1"/>
</dbReference>
<dbReference type="Antibodypedia" id="4588">
    <property type="antibodies" value="504 antibodies from 38 providers"/>
</dbReference>
<dbReference type="DNASU" id="8766"/>
<dbReference type="Ensembl" id="ENST00000261890.7">
    <molecule id="P62491-1"/>
    <property type="protein sequence ID" value="ENSP00000261890.2"/>
    <property type="gene ID" value="ENSG00000103769.10"/>
</dbReference>
<dbReference type="Ensembl" id="ENST00000569896.1">
    <molecule id="P62491-2"/>
    <property type="protein sequence ID" value="ENSP00000456420.1"/>
    <property type="gene ID" value="ENSG00000103769.10"/>
</dbReference>
<dbReference type="GeneID" id="8766"/>
<dbReference type="KEGG" id="hsa:8766"/>
<dbReference type="MANE-Select" id="ENST00000261890.7">
    <property type="protein sequence ID" value="ENSP00000261890.2"/>
    <property type="RefSeq nucleotide sequence ID" value="NM_004663.5"/>
    <property type="RefSeq protein sequence ID" value="NP_004654.1"/>
</dbReference>
<dbReference type="UCSC" id="uc002apk.4">
    <molecule id="P62491-1"/>
    <property type="organism name" value="human"/>
</dbReference>
<dbReference type="AGR" id="HGNC:9760"/>
<dbReference type="CTD" id="8766"/>
<dbReference type="DisGeNET" id="8766"/>
<dbReference type="GeneCards" id="RAB11A"/>
<dbReference type="HGNC" id="HGNC:9760">
    <property type="gene designation" value="RAB11A"/>
</dbReference>
<dbReference type="HPA" id="ENSG00000103769">
    <property type="expression patterns" value="Low tissue specificity"/>
</dbReference>
<dbReference type="MalaCards" id="RAB11A"/>
<dbReference type="MIM" id="605570">
    <property type="type" value="gene"/>
</dbReference>
<dbReference type="neXtProt" id="NX_P62491"/>
<dbReference type="OpenTargets" id="ENSG00000103769"/>
<dbReference type="Orphanet" id="178469">
    <property type="disease" value="Autosomal dominant non-syndromic intellectual disability"/>
</dbReference>
<dbReference type="PharmGKB" id="PA34101"/>
<dbReference type="VEuPathDB" id="HostDB:ENSG00000103769"/>
<dbReference type="eggNOG" id="KOG0087">
    <property type="taxonomic scope" value="Eukaryota"/>
</dbReference>
<dbReference type="GeneTree" id="ENSGT00940000154914"/>
<dbReference type="HOGENOM" id="CLU_041217_23_0_1"/>
<dbReference type="InParanoid" id="P62491"/>
<dbReference type="OMA" id="ITAIYQM"/>
<dbReference type="OrthoDB" id="9989112at2759"/>
<dbReference type="PAN-GO" id="P62491">
    <property type="GO annotations" value="9 GO annotations based on evolutionary models"/>
</dbReference>
<dbReference type="PhylomeDB" id="P62491"/>
<dbReference type="TreeFam" id="TF300099"/>
<dbReference type="PathwayCommons" id="P62491"/>
<dbReference type="Reactome" id="R-HSA-1445148">
    <property type="pathway name" value="Translocation of SLC2A4 (GLUT4) to the plasma membrane"/>
</dbReference>
<dbReference type="Reactome" id="R-HSA-432040">
    <property type="pathway name" value="Vasopressin regulates renal water homeostasis via Aquaporins"/>
</dbReference>
<dbReference type="Reactome" id="R-HSA-5620912">
    <property type="pathway name" value="Anchoring of the basal body to the plasma membrane"/>
</dbReference>
<dbReference type="Reactome" id="R-HSA-5620916">
    <property type="pathway name" value="VxPx cargo-targeting to cilium"/>
</dbReference>
<dbReference type="Reactome" id="R-HSA-8854214">
    <property type="pathway name" value="TBC/RABGAPs"/>
</dbReference>
<dbReference type="Reactome" id="R-HSA-8873719">
    <property type="pathway name" value="RAB geranylgeranylation"/>
</dbReference>
<dbReference type="SignaLink" id="P62491"/>
<dbReference type="SIGNOR" id="P62491"/>
<dbReference type="BioGRID-ORCS" id="8766">
    <property type="hits" value="93 hits in 1160 CRISPR screens"/>
</dbReference>
<dbReference type="CD-CODE" id="91857CE7">
    <property type="entry name" value="Nucleolus"/>
</dbReference>
<dbReference type="ChiTaRS" id="RAB11A">
    <property type="organism name" value="human"/>
</dbReference>
<dbReference type="EvolutionaryTrace" id="P62491"/>
<dbReference type="GeneWiki" id="RAB11A"/>
<dbReference type="GenomeRNAi" id="8766"/>
<dbReference type="Pharos" id="P62491">
    <property type="development level" value="Tbio"/>
</dbReference>
<dbReference type="PRO" id="PR:P62491"/>
<dbReference type="Proteomes" id="UP000005640">
    <property type="component" value="Chromosome 15"/>
</dbReference>
<dbReference type="RNAct" id="P62491">
    <property type="molecule type" value="protein"/>
</dbReference>
<dbReference type="Bgee" id="ENSG00000103769">
    <property type="expression patterns" value="Expressed in esophagus squamous epithelium and 208 other cell types or tissues"/>
</dbReference>
<dbReference type="ExpressionAtlas" id="P62491">
    <property type="expression patterns" value="baseline and differential"/>
</dbReference>
<dbReference type="GO" id="GO:0005814">
    <property type="term" value="C:centriole"/>
    <property type="evidence" value="ECO:0007669"/>
    <property type="project" value="Ensembl"/>
</dbReference>
<dbReference type="GO" id="GO:0005813">
    <property type="term" value="C:centrosome"/>
    <property type="evidence" value="ECO:0000314"/>
    <property type="project" value="UniProtKB"/>
</dbReference>
<dbReference type="GO" id="GO:0032154">
    <property type="term" value="C:cleavage furrow"/>
    <property type="evidence" value="ECO:0000314"/>
    <property type="project" value="UniProtKB"/>
</dbReference>
<dbReference type="GO" id="GO:0031410">
    <property type="term" value="C:cytoplasmic vesicle"/>
    <property type="evidence" value="ECO:0000314"/>
    <property type="project" value="UniProtKB"/>
</dbReference>
<dbReference type="GO" id="GO:0030659">
    <property type="term" value="C:cytoplasmic vesicle membrane"/>
    <property type="evidence" value="ECO:0000304"/>
    <property type="project" value="Reactome"/>
</dbReference>
<dbReference type="GO" id="GO:0005829">
    <property type="term" value="C:cytosol"/>
    <property type="evidence" value="ECO:0000304"/>
    <property type="project" value="Reactome"/>
</dbReference>
<dbReference type="GO" id="GO:0030666">
    <property type="term" value="C:endocytic vesicle membrane"/>
    <property type="evidence" value="ECO:0000314"/>
    <property type="project" value="UniProtKB"/>
</dbReference>
<dbReference type="GO" id="GO:0070062">
    <property type="term" value="C:extracellular exosome"/>
    <property type="evidence" value="ECO:0000314"/>
    <property type="project" value="UniProtKB"/>
</dbReference>
<dbReference type="GO" id="GO:0098978">
    <property type="term" value="C:glutamatergic synapse"/>
    <property type="evidence" value="ECO:0000314"/>
    <property type="project" value="SynGO"/>
</dbReference>
<dbReference type="GO" id="GO:0005794">
    <property type="term" value="C:Golgi apparatus"/>
    <property type="evidence" value="ECO:0007005"/>
    <property type="project" value="UniProtKB"/>
</dbReference>
<dbReference type="GO" id="GO:0000139">
    <property type="term" value="C:Golgi membrane"/>
    <property type="evidence" value="ECO:0000314"/>
    <property type="project" value="UniProtKB"/>
</dbReference>
<dbReference type="GO" id="GO:0005771">
    <property type="term" value="C:multivesicular body"/>
    <property type="evidence" value="ECO:0000314"/>
    <property type="project" value="UniProtKB"/>
</dbReference>
<dbReference type="GO" id="GO:0045335">
    <property type="term" value="C:phagocytic vesicle"/>
    <property type="evidence" value="ECO:0000314"/>
    <property type="project" value="UniProtKB"/>
</dbReference>
<dbReference type="GO" id="GO:0098837">
    <property type="term" value="C:postsynaptic recycling endosome"/>
    <property type="evidence" value="ECO:0000314"/>
    <property type="project" value="SynGO"/>
</dbReference>
<dbReference type="GO" id="GO:0098830">
    <property type="term" value="C:presynaptic endosome"/>
    <property type="evidence" value="ECO:0007669"/>
    <property type="project" value="Ensembl"/>
</dbReference>
<dbReference type="GO" id="GO:0032991">
    <property type="term" value="C:protein-containing complex"/>
    <property type="evidence" value="ECO:0000314"/>
    <property type="project" value="UniProtKB"/>
</dbReference>
<dbReference type="GO" id="GO:0055037">
    <property type="term" value="C:recycling endosome"/>
    <property type="evidence" value="ECO:0000314"/>
    <property type="project" value="UniProtKB"/>
</dbReference>
<dbReference type="GO" id="GO:0055038">
    <property type="term" value="C:recycling endosome membrane"/>
    <property type="evidence" value="ECO:0000304"/>
    <property type="project" value="Reactome"/>
</dbReference>
<dbReference type="GO" id="GO:0098685">
    <property type="term" value="C:Schaffer collateral - CA1 synapse"/>
    <property type="evidence" value="ECO:0007669"/>
    <property type="project" value="Ensembl"/>
</dbReference>
<dbReference type="GO" id="GO:0000922">
    <property type="term" value="C:spindle pole"/>
    <property type="evidence" value="ECO:0000314"/>
    <property type="project" value="UniProtKB"/>
</dbReference>
<dbReference type="GO" id="GO:0030672">
    <property type="term" value="C:synaptic vesicle membrane"/>
    <property type="evidence" value="ECO:0007669"/>
    <property type="project" value="Ensembl"/>
</dbReference>
<dbReference type="GO" id="GO:0005802">
    <property type="term" value="C:trans-Golgi network"/>
    <property type="evidence" value="ECO:0000314"/>
    <property type="project" value="MGI"/>
</dbReference>
<dbReference type="GO" id="GO:0032588">
    <property type="term" value="C:trans-Golgi network membrane"/>
    <property type="evidence" value="ECO:0000314"/>
    <property type="project" value="UniProtKB"/>
</dbReference>
<dbReference type="GO" id="GO:0030133">
    <property type="term" value="C:transport vesicle"/>
    <property type="evidence" value="ECO:0000318"/>
    <property type="project" value="GO_Central"/>
</dbReference>
<dbReference type="GO" id="GO:0031982">
    <property type="term" value="C:vesicle"/>
    <property type="evidence" value="ECO:0000314"/>
    <property type="project" value="UniProtKB"/>
</dbReference>
<dbReference type="GO" id="GO:0051959">
    <property type="term" value="F:dynein light intermediate chain binding"/>
    <property type="evidence" value="ECO:0000314"/>
    <property type="project" value="UniProtKB"/>
</dbReference>
<dbReference type="GO" id="GO:0003925">
    <property type="term" value="F:G protein activity"/>
    <property type="evidence" value="ECO:0000314"/>
    <property type="project" value="UniProt"/>
</dbReference>
<dbReference type="GO" id="GO:0005525">
    <property type="term" value="F:GTP binding"/>
    <property type="evidence" value="ECO:0000318"/>
    <property type="project" value="GO_Central"/>
</dbReference>
<dbReference type="GO" id="GO:0003924">
    <property type="term" value="F:GTPase activity"/>
    <property type="evidence" value="ECO:0000314"/>
    <property type="project" value="UniProtKB"/>
</dbReference>
<dbReference type="GO" id="GO:0008017">
    <property type="term" value="F:microtubule binding"/>
    <property type="evidence" value="ECO:0000314"/>
    <property type="project" value="UniProtKB"/>
</dbReference>
<dbReference type="GO" id="GO:0031489">
    <property type="term" value="F:myosin V binding"/>
    <property type="evidence" value="ECO:0000353"/>
    <property type="project" value="UniProtKB"/>
</dbReference>
<dbReference type="GO" id="GO:0019905">
    <property type="term" value="F:syntaxin binding"/>
    <property type="evidence" value="ECO:0000303"/>
    <property type="project" value="UniProtKB"/>
</dbReference>
<dbReference type="GO" id="GO:0150093">
    <property type="term" value="P:amyloid-beta clearance by transcytosis"/>
    <property type="evidence" value="ECO:0000316"/>
    <property type="project" value="ARUK-UCL"/>
</dbReference>
<dbReference type="GO" id="GO:0030953">
    <property type="term" value="P:astral microtubule organization"/>
    <property type="evidence" value="ECO:0000315"/>
    <property type="project" value="UniProtKB"/>
</dbReference>
<dbReference type="GO" id="GO:0061502">
    <property type="term" value="P:early endosome to recycling endosome transport"/>
    <property type="evidence" value="ECO:0000315"/>
    <property type="project" value="UniProt"/>
</dbReference>
<dbReference type="GO" id="GO:0090150">
    <property type="term" value="P:establishment of protein localization to membrane"/>
    <property type="evidence" value="ECO:0000315"/>
    <property type="project" value="UniProtKB"/>
</dbReference>
<dbReference type="GO" id="GO:0072594">
    <property type="term" value="P:establishment of protein localization to organelle"/>
    <property type="evidence" value="ECO:0000315"/>
    <property type="project" value="UniProtKB"/>
</dbReference>
<dbReference type="GO" id="GO:0051650">
    <property type="term" value="P:establishment of vesicle localization"/>
    <property type="evidence" value="ECO:0000315"/>
    <property type="project" value="UniProtKB"/>
</dbReference>
<dbReference type="GO" id="GO:0006887">
    <property type="term" value="P:exocytosis"/>
    <property type="evidence" value="ECO:0000318"/>
    <property type="project" value="GO_Central"/>
</dbReference>
<dbReference type="GO" id="GO:1990182">
    <property type="term" value="P:exosomal secretion"/>
    <property type="evidence" value="ECO:0000315"/>
    <property type="project" value="UniProtKB"/>
</dbReference>
<dbReference type="GO" id="GO:0043001">
    <property type="term" value="P:Golgi to plasma membrane protein transport"/>
    <property type="evidence" value="ECO:0000305"/>
    <property type="project" value="UniProt"/>
</dbReference>
<dbReference type="GO" id="GO:0032402">
    <property type="term" value="P:melanosome transport"/>
    <property type="evidence" value="ECO:0000250"/>
    <property type="project" value="UniProtKB"/>
</dbReference>
<dbReference type="GO" id="GO:0007080">
    <property type="term" value="P:mitotic metaphase chromosome alignment"/>
    <property type="evidence" value="ECO:0000315"/>
    <property type="project" value="UniProtKB"/>
</dbReference>
<dbReference type="GO" id="GO:0090307">
    <property type="term" value="P:mitotic spindle assembly"/>
    <property type="evidence" value="ECO:0000315"/>
    <property type="project" value="UniProtKB"/>
</dbReference>
<dbReference type="GO" id="GO:0036258">
    <property type="term" value="P:multivesicular body assembly"/>
    <property type="evidence" value="ECO:0000315"/>
    <property type="project" value="UniProtKB"/>
</dbReference>
<dbReference type="GO" id="GO:0031175">
    <property type="term" value="P:neuron projection development"/>
    <property type="evidence" value="ECO:0000315"/>
    <property type="project" value="UniProtKB"/>
</dbReference>
<dbReference type="GO" id="GO:0098887">
    <property type="term" value="P:neurotransmitter receptor transport, endosome to postsynaptic membrane"/>
    <property type="evidence" value="ECO:0000318"/>
    <property type="project" value="GO_Central"/>
</dbReference>
<dbReference type="GO" id="GO:0048227">
    <property type="term" value="P:plasma membrane to endosome transport"/>
    <property type="evidence" value="ECO:0000303"/>
    <property type="project" value="UniProtKB"/>
</dbReference>
<dbReference type="GO" id="GO:0010634">
    <property type="term" value="P:positive regulation of epithelial cell migration"/>
    <property type="evidence" value="ECO:0000315"/>
    <property type="project" value="UniProtKB"/>
</dbReference>
<dbReference type="GO" id="GO:0010971">
    <property type="term" value="P:positive regulation of G2/M transition of mitotic cell cycle"/>
    <property type="evidence" value="ECO:0000315"/>
    <property type="project" value="UniProtKB"/>
</dbReference>
<dbReference type="GO" id="GO:1903438">
    <property type="term" value="P:positive regulation of mitotic cytokinetic process"/>
    <property type="evidence" value="ECO:0000314"/>
    <property type="project" value="UniProt"/>
</dbReference>
<dbReference type="GO" id="GO:1903078">
    <property type="term" value="P:positive regulation of protein localization to plasma membrane"/>
    <property type="evidence" value="ECO:0007669"/>
    <property type="project" value="Ensembl"/>
</dbReference>
<dbReference type="GO" id="GO:0034394">
    <property type="term" value="P:protein localization to cell surface"/>
    <property type="evidence" value="ECO:0007669"/>
    <property type="project" value="Ensembl"/>
</dbReference>
<dbReference type="GO" id="GO:0061512">
    <property type="term" value="P:protein localization to cilium"/>
    <property type="evidence" value="ECO:0000314"/>
    <property type="project" value="UniProtKB"/>
</dbReference>
<dbReference type="GO" id="GO:0072659">
    <property type="term" value="P:protein localization to plasma membrane"/>
    <property type="evidence" value="ECO:0000314"/>
    <property type="project" value="UniProtKB"/>
</dbReference>
<dbReference type="GO" id="GO:0071806">
    <property type="term" value="P:protein transmembrane transport"/>
    <property type="evidence" value="ECO:0007669"/>
    <property type="project" value="Ensembl"/>
</dbReference>
<dbReference type="GO" id="GO:1902017">
    <property type="term" value="P:regulation of cilium assembly"/>
    <property type="evidence" value="ECO:0000314"/>
    <property type="project" value="UniProtKB"/>
</dbReference>
<dbReference type="GO" id="GO:0032465">
    <property type="term" value="P:regulation of cytokinesis"/>
    <property type="evidence" value="ECO:0000315"/>
    <property type="project" value="UniProtKB"/>
</dbReference>
<dbReference type="GO" id="GO:1902954">
    <property type="term" value="P:regulation of early endosome to recycling endosome transport"/>
    <property type="evidence" value="ECO:0000314"/>
    <property type="project" value="UniProtKB"/>
</dbReference>
<dbReference type="GO" id="GO:2001135">
    <property type="term" value="P:regulation of endocytic recycling"/>
    <property type="evidence" value="ECO:0000314"/>
    <property type="project" value="UniProtKB"/>
</dbReference>
<dbReference type="GO" id="GO:0048169">
    <property type="term" value="P:regulation of long-term neuronal synaptic plasticity"/>
    <property type="evidence" value="ECO:0007669"/>
    <property type="project" value="Ensembl"/>
</dbReference>
<dbReference type="GO" id="GO:1904779">
    <property type="term" value="P:regulation of protein localization to centrosome"/>
    <property type="evidence" value="ECO:0000314"/>
    <property type="project" value="UniProtKB"/>
</dbReference>
<dbReference type="GO" id="GO:0051223">
    <property type="term" value="P:regulation of protein transport"/>
    <property type="evidence" value="ECO:0007669"/>
    <property type="project" value="Ensembl"/>
</dbReference>
<dbReference type="GO" id="GO:0060627">
    <property type="term" value="P:regulation of vesicle-mediated transport"/>
    <property type="evidence" value="ECO:0000314"/>
    <property type="project" value="UniProtKB"/>
</dbReference>
<dbReference type="GO" id="GO:0099532">
    <property type="term" value="P:synaptic vesicle endosomal processing"/>
    <property type="evidence" value="ECO:0007669"/>
    <property type="project" value="Ensembl"/>
</dbReference>
<dbReference type="GO" id="GO:0016192">
    <property type="term" value="P:vesicle-mediated transport"/>
    <property type="evidence" value="ECO:0000314"/>
    <property type="project" value="UniProtKB"/>
</dbReference>
<dbReference type="GO" id="GO:0099003">
    <property type="term" value="P:vesicle-mediated transport in synapse"/>
    <property type="evidence" value="ECO:0007669"/>
    <property type="project" value="Ensembl"/>
</dbReference>
<dbReference type="CDD" id="cd01868">
    <property type="entry name" value="Rab11_like"/>
    <property type="match status" value="1"/>
</dbReference>
<dbReference type="FunFam" id="3.40.50.300:FF:000085">
    <property type="entry name" value="Putative ras-related protein rab-11a"/>
    <property type="match status" value="1"/>
</dbReference>
<dbReference type="Gene3D" id="3.40.50.300">
    <property type="entry name" value="P-loop containing nucleotide triphosphate hydrolases"/>
    <property type="match status" value="1"/>
</dbReference>
<dbReference type="InterPro" id="IPR027417">
    <property type="entry name" value="P-loop_NTPase"/>
</dbReference>
<dbReference type="InterPro" id="IPR050209">
    <property type="entry name" value="Rab_GTPases_membrane_traffic"/>
</dbReference>
<dbReference type="InterPro" id="IPR005225">
    <property type="entry name" value="Small_GTP-bd"/>
</dbReference>
<dbReference type="InterPro" id="IPR001806">
    <property type="entry name" value="Small_GTPase"/>
</dbReference>
<dbReference type="NCBIfam" id="TIGR00231">
    <property type="entry name" value="small_GTP"/>
    <property type="match status" value="1"/>
</dbReference>
<dbReference type="PANTHER" id="PTHR47979">
    <property type="entry name" value="DRAB11-RELATED"/>
    <property type="match status" value="1"/>
</dbReference>
<dbReference type="Pfam" id="PF00071">
    <property type="entry name" value="Ras"/>
    <property type="match status" value="1"/>
</dbReference>
<dbReference type="PRINTS" id="PR00449">
    <property type="entry name" value="RASTRNSFRMNG"/>
</dbReference>
<dbReference type="SMART" id="SM00175">
    <property type="entry name" value="RAB"/>
    <property type="match status" value="1"/>
</dbReference>
<dbReference type="SMART" id="SM00176">
    <property type="entry name" value="RAN"/>
    <property type="match status" value="1"/>
</dbReference>
<dbReference type="SMART" id="SM00173">
    <property type="entry name" value="RAS"/>
    <property type="match status" value="1"/>
</dbReference>
<dbReference type="SMART" id="SM00174">
    <property type="entry name" value="RHO"/>
    <property type="match status" value="1"/>
</dbReference>
<dbReference type="SUPFAM" id="SSF52540">
    <property type="entry name" value="P-loop containing nucleoside triphosphate hydrolases"/>
    <property type="match status" value="1"/>
</dbReference>
<dbReference type="PROSITE" id="PS51419">
    <property type="entry name" value="RAB"/>
    <property type="match status" value="1"/>
</dbReference>
<organism>
    <name type="scientific">Homo sapiens</name>
    <name type="common">Human</name>
    <dbReference type="NCBI Taxonomy" id="9606"/>
    <lineage>
        <taxon>Eukaryota</taxon>
        <taxon>Metazoa</taxon>
        <taxon>Chordata</taxon>
        <taxon>Craniata</taxon>
        <taxon>Vertebrata</taxon>
        <taxon>Euteleostomi</taxon>
        <taxon>Mammalia</taxon>
        <taxon>Eutheria</taxon>
        <taxon>Euarchontoglires</taxon>
        <taxon>Primates</taxon>
        <taxon>Haplorrhini</taxon>
        <taxon>Catarrhini</taxon>
        <taxon>Hominidae</taxon>
        <taxon>Homo</taxon>
    </lineage>
</organism>
<accession>P62491</accession>
<accession>B2R4B6</accession>
<accession>B4DT13</accession>
<accession>P24410</accession>
<accession>Q5TZN9</accession>
<accession>Q9JLX1</accession>